<gene>
    <name evidence="28" type="primary">Shh</name>
    <name type="synonym">Hhg1</name>
</gene>
<dbReference type="EC" id="3.1.-.-" evidence="21"/>
<dbReference type="EMBL" id="X76290">
    <property type="protein sequence ID" value="CAA53922.1"/>
    <property type="molecule type" value="mRNA"/>
</dbReference>
<dbReference type="EMBL" id="AK077688">
    <property type="protein sequence ID" value="BAC36956.1"/>
    <property type="molecule type" value="mRNA"/>
</dbReference>
<dbReference type="EMBL" id="BC063087">
    <property type="protein sequence ID" value="AAH63087.1"/>
    <property type="molecule type" value="mRNA"/>
</dbReference>
<dbReference type="CCDS" id="CCDS19146.1"/>
<dbReference type="PIR" id="A49425">
    <property type="entry name" value="A49425"/>
</dbReference>
<dbReference type="RefSeq" id="NP_033196.1">
    <property type="nucleotide sequence ID" value="NM_009170.4"/>
</dbReference>
<dbReference type="PDB" id="1VHH">
    <property type="method" value="X-ray"/>
    <property type="resolution" value="1.70 A"/>
    <property type="chains" value="A=34-195"/>
</dbReference>
<dbReference type="PDB" id="2WFX">
    <property type="method" value="X-ray"/>
    <property type="resolution" value="3.20 A"/>
    <property type="chains" value="A=40-191"/>
</dbReference>
<dbReference type="PDB" id="2WG4">
    <property type="method" value="X-ray"/>
    <property type="resolution" value="3.15 A"/>
    <property type="chains" value="A=40-191"/>
</dbReference>
<dbReference type="PDB" id="3D1M">
    <property type="method" value="X-ray"/>
    <property type="resolution" value="1.70 A"/>
    <property type="chains" value="A/B=26-189"/>
</dbReference>
<dbReference type="PDB" id="3N1R">
    <property type="method" value="X-ray"/>
    <property type="resolution" value="2.13 A"/>
    <property type="chains" value="A=40-195"/>
</dbReference>
<dbReference type="PDB" id="4C4M">
    <property type="method" value="X-ray"/>
    <property type="resolution" value="1.74 A"/>
    <property type="chains" value="A=40-195"/>
</dbReference>
<dbReference type="PDB" id="4C4N">
    <property type="method" value="X-ray"/>
    <property type="resolution" value="2.36 A"/>
    <property type="chains" value="A/B=40-195"/>
</dbReference>
<dbReference type="PDB" id="7RPK">
    <property type="method" value="EM"/>
    <property type="resolution" value="2.70 A"/>
    <property type="chains" value="H=26-189"/>
</dbReference>
<dbReference type="PDBsum" id="1VHH"/>
<dbReference type="PDBsum" id="2WFX"/>
<dbReference type="PDBsum" id="2WG4"/>
<dbReference type="PDBsum" id="3D1M"/>
<dbReference type="PDBsum" id="3N1R"/>
<dbReference type="PDBsum" id="4C4M"/>
<dbReference type="PDBsum" id="4C4N"/>
<dbReference type="PDBsum" id="7RPK"/>
<dbReference type="EMDB" id="EMD-24617"/>
<dbReference type="SMR" id="Q62226"/>
<dbReference type="BioGRID" id="203220">
    <property type="interactions" value="10"/>
</dbReference>
<dbReference type="CORUM" id="Q62226"/>
<dbReference type="DIP" id="DIP-48537N"/>
<dbReference type="FunCoup" id="Q62226">
    <property type="interactions" value="275"/>
</dbReference>
<dbReference type="IntAct" id="Q62226">
    <property type="interactions" value="7"/>
</dbReference>
<dbReference type="STRING" id="10090.ENSMUSP00000002708"/>
<dbReference type="BindingDB" id="Q62226"/>
<dbReference type="ChEMBL" id="CHEMBL5387"/>
<dbReference type="DrugCentral" id="Q62226"/>
<dbReference type="MEROPS" id="C46.002"/>
<dbReference type="GlyCosmos" id="Q62226">
    <property type="glycosylation" value="1 site, No reported glycans"/>
</dbReference>
<dbReference type="GlyGen" id="Q62226">
    <property type="glycosylation" value="3 sites"/>
</dbReference>
<dbReference type="iPTMnet" id="Q62226"/>
<dbReference type="PhosphoSitePlus" id="Q62226"/>
<dbReference type="SwissPalm" id="Q62226"/>
<dbReference type="PaxDb" id="10090-ENSMUSP00000002708"/>
<dbReference type="ProteomicsDB" id="261352"/>
<dbReference type="ABCD" id="Q62226">
    <property type="antibodies" value="3 sequenced antibodies"/>
</dbReference>
<dbReference type="Antibodypedia" id="4514">
    <property type="antibodies" value="646 antibodies from 42 providers"/>
</dbReference>
<dbReference type="DNASU" id="20423"/>
<dbReference type="Ensembl" id="ENSMUST00000002708.5">
    <property type="protein sequence ID" value="ENSMUSP00000002708.4"/>
    <property type="gene ID" value="ENSMUSG00000002633.5"/>
</dbReference>
<dbReference type="GeneID" id="20423"/>
<dbReference type="KEGG" id="mmu:20423"/>
<dbReference type="UCSC" id="uc008wua.2">
    <property type="organism name" value="mouse"/>
</dbReference>
<dbReference type="AGR" id="MGI:98297"/>
<dbReference type="CTD" id="6469"/>
<dbReference type="MGI" id="MGI:98297">
    <property type="gene designation" value="Shh"/>
</dbReference>
<dbReference type="VEuPathDB" id="HostDB:ENSMUSG00000002633"/>
<dbReference type="eggNOG" id="KOG3638">
    <property type="taxonomic scope" value="Eukaryota"/>
</dbReference>
<dbReference type="GeneTree" id="ENSGT00940000159119"/>
<dbReference type="HOGENOM" id="CLU_034686_0_0_1"/>
<dbReference type="InParanoid" id="Q62226"/>
<dbReference type="OMA" id="HWVSSLL"/>
<dbReference type="OrthoDB" id="5212at2759"/>
<dbReference type="PhylomeDB" id="Q62226"/>
<dbReference type="TreeFam" id="TF106458"/>
<dbReference type="Reactome" id="R-MMU-5358346">
    <property type="pathway name" value="Hedgehog ligand biogenesis"/>
</dbReference>
<dbReference type="Reactome" id="R-MMU-5362798">
    <property type="pathway name" value="Release of Hh-Np from the secreting cell"/>
</dbReference>
<dbReference type="Reactome" id="R-MMU-5632681">
    <property type="pathway name" value="Ligand-receptor interactions"/>
</dbReference>
<dbReference type="Reactome" id="R-MMU-5635838">
    <property type="pathway name" value="Activation of SMO"/>
</dbReference>
<dbReference type="BioGRID-ORCS" id="20423">
    <property type="hits" value="1 hit in 83 CRISPR screens"/>
</dbReference>
<dbReference type="EvolutionaryTrace" id="Q62226"/>
<dbReference type="PRO" id="PR:Q62226"/>
<dbReference type="Proteomes" id="UP000000589">
    <property type="component" value="Chromosome 5"/>
</dbReference>
<dbReference type="RNAct" id="Q62226">
    <property type="molecule type" value="protein"/>
</dbReference>
<dbReference type="Bgee" id="ENSMUSG00000002633">
    <property type="expression patterns" value="Expressed in urinary bladder urothelium and 293 other cell types or tissues"/>
</dbReference>
<dbReference type="GO" id="GO:0009986">
    <property type="term" value="C:cell surface"/>
    <property type="evidence" value="ECO:0000314"/>
    <property type="project" value="MGI"/>
</dbReference>
<dbReference type="GO" id="GO:0005783">
    <property type="term" value="C:endoplasmic reticulum"/>
    <property type="evidence" value="ECO:0000250"/>
    <property type="project" value="UniProtKB"/>
</dbReference>
<dbReference type="GO" id="GO:0005788">
    <property type="term" value="C:endoplasmic reticulum lumen"/>
    <property type="evidence" value="ECO:0000304"/>
    <property type="project" value="Reactome"/>
</dbReference>
<dbReference type="GO" id="GO:0005789">
    <property type="term" value="C:endoplasmic reticulum membrane"/>
    <property type="evidence" value="ECO:0007669"/>
    <property type="project" value="UniProtKB-SubCell"/>
</dbReference>
<dbReference type="GO" id="GO:0031012">
    <property type="term" value="C:extracellular matrix"/>
    <property type="evidence" value="ECO:0000314"/>
    <property type="project" value="MGI"/>
</dbReference>
<dbReference type="GO" id="GO:0005576">
    <property type="term" value="C:extracellular region"/>
    <property type="evidence" value="ECO:0000304"/>
    <property type="project" value="Reactome"/>
</dbReference>
<dbReference type="GO" id="GO:0005615">
    <property type="term" value="C:extracellular space"/>
    <property type="evidence" value="ECO:0000314"/>
    <property type="project" value="MGI"/>
</dbReference>
<dbReference type="GO" id="GO:0005794">
    <property type="term" value="C:Golgi apparatus"/>
    <property type="evidence" value="ECO:0000250"/>
    <property type="project" value="UniProtKB"/>
</dbReference>
<dbReference type="GO" id="GO:0000139">
    <property type="term" value="C:Golgi membrane"/>
    <property type="evidence" value="ECO:0007669"/>
    <property type="project" value="UniProtKB-SubCell"/>
</dbReference>
<dbReference type="GO" id="GO:0016020">
    <property type="term" value="C:membrane"/>
    <property type="evidence" value="ECO:0000314"/>
    <property type="project" value="MGI"/>
</dbReference>
<dbReference type="GO" id="GO:0045121">
    <property type="term" value="C:membrane raft"/>
    <property type="evidence" value="ECO:0000314"/>
    <property type="project" value="MGI"/>
</dbReference>
<dbReference type="GO" id="GO:0005654">
    <property type="term" value="C:nucleoplasm"/>
    <property type="evidence" value="ECO:0000304"/>
    <property type="project" value="Reactome"/>
</dbReference>
<dbReference type="GO" id="GO:0005886">
    <property type="term" value="C:plasma membrane"/>
    <property type="evidence" value="ECO:0000304"/>
    <property type="project" value="Reactome"/>
</dbReference>
<dbReference type="GO" id="GO:0005509">
    <property type="term" value="F:calcium ion binding"/>
    <property type="evidence" value="ECO:0000250"/>
    <property type="project" value="UniProtKB"/>
</dbReference>
<dbReference type="GO" id="GO:0140853">
    <property type="term" value="F:cholesterol-protein transferase activity"/>
    <property type="evidence" value="ECO:0000314"/>
    <property type="project" value="UniProtKB"/>
</dbReference>
<dbReference type="GO" id="GO:0005539">
    <property type="term" value="F:glycosaminoglycan binding"/>
    <property type="evidence" value="ECO:0000314"/>
    <property type="project" value="MGI"/>
</dbReference>
<dbReference type="GO" id="GO:0043237">
    <property type="term" value="F:laminin-1 binding"/>
    <property type="evidence" value="ECO:0000314"/>
    <property type="project" value="MGI"/>
</dbReference>
<dbReference type="GO" id="GO:0005113">
    <property type="term" value="F:patched binding"/>
    <property type="evidence" value="ECO:0000353"/>
    <property type="project" value="Roslin"/>
</dbReference>
<dbReference type="GO" id="GO:0008233">
    <property type="term" value="F:peptidase activity"/>
    <property type="evidence" value="ECO:0000314"/>
    <property type="project" value="UniProtKB"/>
</dbReference>
<dbReference type="GO" id="GO:0008270">
    <property type="term" value="F:zinc ion binding"/>
    <property type="evidence" value="ECO:0000250"/>
    <property type="project" value="UniProtKB"/>
</dbReference>
<dbReference type="GO" id="GO:0046632">
    <property type="term" value="P:alpha-beta T cell differentiation"/>
    <property type="evidence" value="ECO:0000315"/>
    <property type="project" value="MGI"/>
</dbReference>
<dbReference type="GO" id="GO:0048646">
    <property type="term" value="P:anatomical structure formation involved in morphogenesis"/>
    <property type="evidence" value="ECO:0000315"/>
    <property type="project" value="MGI"/>
</dbReference>
<dbReference type="GO" id="GO:0008209">
    <property type="term" value="P:androgen metabolic process"/>
    <property type="evidence" value="ECO:0000315"/>
    <property type="project" value="MGI"/>
</dbReference>
<dbReference type="GO" id="GO:0001525">
    <property type="term" value="P:angiogenesis"/>
    <property type="evidence" value="ECO:0000314"/>
    <property type="project" value="MGI"/>
</dbReference>
<dbReference type="GO" id="GO:0048645">
    <property type="term" value="P:animal organ formation"/>
    <property type="evidence" value="ECO:0000315"/>
    <property type="project" value="MGI"/>
</dbReference>
<dbReference type="GO" id="GO:0009952">
    <property type="term" value="P:anterior/posterior pattern specification"/>
    <property type="evidence" value="ECO:0000315"/>
    <property type="project" value="MGI"/>
</dbReference>
<dbReference type="GO" id="GO:0097190">
    <property type="term" value="P:apoptotic signaling pathway"/>
    <property type="evidence" value="ECO:0000314"/>
    <property type="project" value="Roslin"/>
</dbReference>
<dbReference type="GO" id="GO:0060840">
    <property type="term" value="P:artery development"/>
    <property type="evidence" value="ECO:0000315"/>
    <property type="project" value="MGI"/>
</dbReference>
<dbReference type="GO" id="GO:0048708">
    <property type="term" value="P:astrocyte differentiation"/>
    <property type="evidence" value="ECO:0000315"/>
    <property type="project" value="MGI"/>
</dbReference>
<dbReference type="GO" id="GO:0007411">
    <property type="term" value="P:axon guidance"/>
    <property type="evidence" value="ECO:0000314"/>
    <property type="project" value="MGI"/>
</dbReference>
<dbReference type="GO" id="GO:0060020">
    <property type="term" value="P:Bergmann glial cell differentiation"/>
    <property type="evidence" value="ECO:0000314"/>
    <property type="project" value="MGI"/>
</dbReference>
<dbReference type="GO" id="GO:0007596">
    <property type="term" value="P:blood coagulation"/>
    <property type="evidence" value="ECO:0000315"/>
    <property type="project" value="MGI"/>
</dbReference>
<dbReference type="GO" id="GO:0001569">
    <property type="term" value="P:branching involved in blood vessel morphogenesis"/>
    <property type="evidence" value="ECO:0000315"/>
    <property type="project" value="MGI"/>
</dbReference>
<dbReference type="GO" id="GO:0060442">
    <property type="term" value="P:branching involved in prostate gland morphogenesis"/>
    <property type="evidence" value="ECO:0000314"/>
    <property type="project" value="MGI"/>
</dbReference>
<dbReference type="GO" id="GO:0060445">
    <property type="term" value="P:branching involved in salivary gland morphogenesis"/>
    <property type="evidence" value="ECO:0000315"/>
    <property type="project" value="MGI"/>
</dbReference>
<dbReference type="GO" id="GO:0001658">
    <property type="term" value="P:branching involved in ureteric bud morphogenesis"/>
    <property type="evidence" value="ECO:0000315"/>
    <property type="project" value="MGI"/>
</dbReference>
<dbReference type="GO" id="GO:0048754">
    <property type="term" value="P:branching morphogenesis of an epithelial tube"/>
    <property type="evidence" value="ECO:0000315"/>
    <property type="project" value="MGI"/>
</dbReference>
<dbReference type="GO" id="GO:0060447">
    <property type="term" value="P:bud outgrowth involved in lung branching"/>
    <property type="evidence" value="ECO:0000315"/>
    <property type="project" value="MGI"/>
</dbReference>
<dbReference type="GO" id="GO:0043010">
    <property type="term" value="P:camera-type eye development"/>
    <property type="evidence" value="ECO:0000314"/>
    <property type="project" value="MGI"/>
</dbReference>
<dbReference type="GO" id="GO:0060070">
    <property type="term" value="P:canonical Wnt signaling pathway"/>
    <property type="evidence" value="ECO:0000315"/>
    <property type="project" value="MGI"/>
</dbReference>
<dbReference type="GO" id="GO:0043369">
    <property type="term" value="P:CD4-positive or CD8-positive, alpha-beta T cell lineage commitment"/>
    <property type="evidence" value="ECO:0000315"/>
    <property type="project" value="BHF-UCL"/>
</dbReference>
<dbReference type="GO" id="GO:0048468">
    <property type="term" value="P:cell development"/>
    <property type="evidence" value="ECO:0000315"/>
    <property type="project" value="MGI"/>
</dbReference>
<dbReference type="GO" id="GO:0045165">
    <property type="term" value="P:cell fate commitment"/>
    <property type="evidence" value="ECO:0000316"/>
    <property type="project" value="MGI"/>
</dbReference>
<dbReference type="GO" id="GO:0001708">
    <property type="term" value="P:cell fate specification"/>
    <property type="evidence" value="ECO:0000314"/>
    <property type="project" value="MGI"/>
</dbReference>
<dbReference type="GO" id="GO:0016477">
    <property type="term" value="P:cell migration"/>
    <property type="evidence" value="ECO:0000314"/>
    <property type="project" value="MGI"/>
</dbReference>
<dbReference type="GO" id="GO:0008283">
    <property type="term" value="P:cell population proliferation"/>
    <property type="evidence" value="ECO:0000315"/>
    <property type="project" value="MGI"/>
</dbReference>
<dbReference type="GO" id="GO:0021924">
    <property type="term" value="P:cell proliferation in external granule layer"/>
    <property type="evidence" value="ECO:0000314"/>
    <property type="project" value="MGI"/>
</dbReference>
<dbReference type="GO" id="GO:0007267">
    <property type="term" value="P:cell-cell signaling"/>
    <property type="evidence" value="ECO:0000315"/>
    <property type="project" value="MGI"/>
</dbReference>
<dbReference type="GO" id="GO:0071285">
    <property type="term" value="P:cellular response to lithium ion"/>
    <property type="evidence" value="ECO:0000314"/>
    <property type="project" value="MGI"/>
</dbReference>
<dbReference type="GO" id="GO:0007417">
    <property type="term" value="P:central nervous system development"/>
    <property type="evidence" value="ECO:0000315"/>
    <property type="project" value="MGI"/>
</dbReference>
<dbReference type="GO" id="GO:0021930">
    <property type="term" value="P:cerebellar granule cell precursor proliferation"/>
    <property type="evidence" value="ECO:0000314"/>
    <property type="project" value="UniProtKB"/>
</dbReference>
<dbReference type="GO" id="GO:0003140">
    <property type="term" value="P:determination of left/right asymmetry in lateral mesoderm"/>
    <property type="evidence" value="ECO:0000315"/>
    <property type="project" value="BHF-UCL"/>
</dbReference>
<dbReference type="GO" id="GO:0007368">
    <property type="term" value="P:determination of left/right symmetry"/>
    <property type="evidence" value="ECO:0000315"/>
    <property type="project" value="MGI"/>
</dbReference>
<dbReference type="GO" id="GO:0048589">
    <property type="term" value="P:developmental growth"/>
    <property type="evidence" value="ECO:0000315"/>
    <property type="project" value="MGI"/>
</dbReference>
<dbReference type="GO" id="GO:0048546">
    <property type="term" value="P:digestive tract morphogenesis"/>
    <property type="evidence" value="ECO:0000315"/>
    <property type="project" value="MGI"/>
</dbReference>
<dbReference type="GO" id="GO:0071542">
    <property type="term" value="P:dopaminergic neuron differentiation"/>
    <property type="evidence" value="ECO:0000304"/>
    <property type="project" value="ParkinsonsUK-UCL"/>
</dbReference>
<dbReference type="GO" id="GO:0021904">
    <property type="term" value="P:dorsal/ventral neural tube patterning"/>
    <property type="evidence" value="ECO:0000314"/>
    <property type="project" value="MGI"/>
</dbReference>
<dbReference type="GO" id="GO:0009953">
    <property type="term" value="P:dorsal/ventral pattern formation"/>
    <property type="evidence" value="ECO:0000316"/>
    <property type="project" value="MGI"/>
</dbReference>
<dbReference type="GO" id="GO:0007398">
    <property type="term" value="P:ectoderm development"/>
    <property type="evidence" value="ECO:0000315"/>
    <property type="project" value="MGI"/>
</dbReference>
<dbReference type="GO" id="GO:0048557">
    <property type="term" value="P:embryonic digestive tract morphogenesis"/>
    <property type="evidence" value="ECO:0000315"/>
    <property type="project" value="MGI"/>
</dbReference>
<dbReference type="GO" id="GO:0042733">
    <property type="term" value="P:embryonic digit morphogenesis"/>
    <property type="evidence" value="ECO:0000315"/>
    <property type="project" value="Roslin"/>
</dbReference>
<dbReference type="GO" id="GO:0048617">
    <property type="term" value="P:embryonic foregut morphogenesis"/>
    <property type="evidence" value="ECO:0000315"/>
    <property type="project" value="MGI"/>
</dbReference>
<dbReference type="GO" id="GO:0035115">
    <property type="term" value="P:embryonic forelimb morphogenesis"/>
    <property type="evidence" value="ECO:0000315"/>
    <property type="project" value="MGI"/>
</dbReference>
<dbReference type="GO" id="GO:0035116">
    <property type="term" value="P:embryonic hindlimb morphogenesis"/>
    <property type="evidence" value="ECO:0000315"/>
    <property type="project" value="MGI"/>
</dbReference>
<dbReference type="GO" id="GO:0030326">
    <property type="term" value="P:embryonic limb morphogenesis"/>
    <property type="evidence" value="ECO:0000315"/>
    <property type="project" value="MGI"/>
</dbReference>
<dbReference type="GO" id="GO:0048598">
    <property type="term" value="P:embryonic morphogenesis"/>
    <property type="evidence" value="ECO:0000315"/>
    <property type="project" value="MGI"/>
</dbReference>
<dbReference type="GO" id="GO:0048568">
    <property type="term" value="P:embryonic organ development"/>
    <property type="evidence" value="ECO:0000315"/>
    <property type="project" value="MGI"/>
</dbReference>
<dbReference type="GO" id="GO:0048706">
    <property type="term" value="P:embryonic skeletal system development"/>
    <property type="evidence" value="ECO:0000316"/>
    <property type="project" value="MGI"/>
</dbReference>
<dbReference type="GO" id="GO:0006897">
    <property type="term" value="P:endocytosis"/>
    <property type="evidence" value="ECO:0000314"/>
    <property type="project" value="MGI"/>
</dbReference>
<dbReference type="GO" id="GO:0050673">
    <property type="term" value="P:epithelial cell proliferation"/>
    <property type="evidence" value="ECO:0000315"/>
    <property type="project" value="MGI"/>
</dbReference>
<dbReference type="GO" id="GO:0060767">
    <property type="term" value="P:epithelial cell proliferation involved in prostate gland development"/>
    <property type="evidence" value="ECO:0000315"/>
    <property type="project" value="MGI"/>
</dbReference>
<dbReference type="GO" id="GO:0060664">
    <property type="term" value="P:epithelial cell proliferation involved in salivary gland morphogenesis"/>
    <property type="evidence" value="ECO:0000315"/>
    <property type="project" value="MGI"/>
</dbReference>
<dbReference type="GO" id="GO:0060441">
    <property type="term" value="P:epithelial tube branching involved in lung morphogenesis"/>
    <property type="evidence" value="ECO:0000315"/>
    <property type="project" value="MGI"/>
</dbReference>
<dbReference type="GO" id="GO:0060684">
    <property type="term" value="P:epithelial-mesenchymal cell signaling"/>
    <property type="evidence" value="ECO:0000315"/>
    <property type="project" value="MGI"/>
</dbReference>
<dbReference type="GO" id="GO:0060738">
    <property type="term" value="P:epithelial-mesenchymal signaling involved in prostate gland development"/>
    <property type="evidence" value="ECO:0000316"/>
    <property type="project" value="MGI"/>
</dbReference>
<dbReference type="GO" id="GO:0090162">
    <property type="term" value="P:establishment of epithelial cell polarity"/>
    <property type="evidence" value="ECO:0000314"/>
    <property type="project" value="MGI"/>
</dbReference>
<dbReference type="GO" id="GO:0030900">
    <property type="term" value="P:forebrain development"/>
    <property type="evidence" value="ECO:0000316"/>
    <property type="project" value="MGI"/>
</dbReference>
<dbReference type="GO" id="GO:0021871">
    <property type="term" value="P:forebrain regionalization"/>
    <property type="evidence" value="ECO:0000315"/>
    <property type="project" value="MGI"/>
</dbReference>
<dbReference type="GO" id="GO:0048859">
    <property type="term" value="P:formation of anatomical boundary"/>
    <property type="evidence" value="ECO:0000315"/>
    <property type="project" value="MGI"/>
</dbReference>
<dbReference type="GO" id="GO:0010467">
    <property type="term" value="P:gene expression"/>
    <property type="evidence" value="ECO:0000314"/>
    <property type="project" value="MGI"/>
</dbReference>
<dbReference type="GO" id="GO:0001942">
    <property type="term" value="P:hair follicle development"/>
    <property type="evidence" value="ECO:0000315"/>
    <property type="project" value="MGI"/>
</dbReference>
<dbReference type="GO" id="GO:0031069">
    <property type="term" value="P:hair follicle morphogenesis"/>
    <property type="evidence" value="ECO:0000315"/>
    <property type="project" value="MGI"/>
</dbReference>
<dbReference type="GO" id="GO:0007507">
    <property type="term" value="P:heart development"/>
    <property type="evidence" value="ECO:0000315"/>
    <property type="project" value="MGI"/>
</dbReference>
<dbReference type="GO" id="GO:0001947">
    <property type="term" value="P:heart looping"/>
    <property type="evidence" value="ECO:0000315"/>
    <property type="project" value="BHF-UCL"/>
</dbReference>
<dbReference type="GO" id="GO:0030902">
    <property type="term" value="P:hindbrain development"/>
    <property type="evidence" value="ECO:0000315"/>
    <property type="project" value="MGI"/>
</dbReference>
<dbReference type="GO" id="GO:0007442">
    <property type="term" value="P:hindgut morphogenesis"/>
    <property type="evidence" value="ECO:0000315"/>
    <property type="project" value="MGI"/>
</dbReference>
<dbReference type="GO" id="GO:0048839">
    <property type="term" value="P:inner ear development"/>
    <property type="evidence" value="ECO:0000315"/>
    <property type="project" value="MGI"/>
</dbReference>
<dbReference type="GO" id="GO:0016539">
    <property type="term" value="P:intein-mediated protein splicing"/>
    <property type="evidence" value="ECO:0007669"/>
    <property type="project" value="InterPro"/>
</dbReference>
<dbReference type="GO" id="GO:0045109">
    <property type="term" value="P:intermediate filament organization"/>
    <property type="evidence" value="ECO:0000315"/>
    <property type="project" value="MGI"/>
</dbReference>
<dbReference type="GO" id="GO:0001822">
    <property type="term" value="P:kidney development"/>
    <property type="evidence" value="ECO:0000315"/>
    <property type="project" value="MGI"/>
</dbReference>
<dbReference type="GO" id="GO:0060459">
    <property type="term" value="P:left lung development"/>
    <property type="evidence" value="ECO:0000315"/>
    <property type="project" value="MGI"/>
</dbReference>
<dbReference type="GO" id="GO:0060174">
    <property type="term" value="P:limb bud formation"/>
    <property type="evidence" value="ECO:0000315"/>
    <property type="project" value="MGI"/>
</dbReference>
<dbReference type="GO" id="GO:0060173">
    <property type="term" value="P:limb development"/>
    <property type="evidence" value="ECO:0000315"/>
    <property type="project" value="MGI"/>
</dbReference>
<dbReference type="GO" id="GO:0030324">
    <property type="term" value="P:lung development"/>
    <property type="evidence" value="ECO:0000315"/>
    <property type="project" value="MGI"/>
</dbReference>
<dbReference type="GO" id="GO:0060428">
    <property type="term" value="P:lung epithelium development"/>
    <property type="evidence" value="ECO:0000315"/>
    <property type="project" value="MGI"/>
</dbReference>
<dbReference type="GO" id="GO:0060463">
    <property type="term" value="P:lung lobe morphogenesis"/>
    <property type="evidence" value="ECO:0000315"/>
    <property type="project" value="MGI"/>
</dbReference>
<dbReference type="GO" id="GO:0060425">
    <property type="term" value="P:lung morphogenesis"/>
    <property type="evidence" value="ECO:0000315"/>
    <property type="project" value="MGI"/>
</dbReference>
<dbReference type="GO" id="GO:0060484">
    <property type="term" value="P:lung-associated mesenchyme development"/>
    <property type="evidence" value="ECO:0000315"/>
    <property type="project" value="MGI"/>
</dbReference>
<dbReference type="GO" id="GO:0002320">
    <property type="term" value="P:lymphoid progenitor cell differentiation"/>
    <property type="evidence" value="ECO:0000315"/>
    <property type="project" value="BHF-UCL"/>
</dbReference>
<dbReference type="GO" id="GO:0030539">
    <property type="term" value="P:male genitalia development"/>
    <property type="evidence" value="ECO:0000315"/>
    <property type="project" value="MGI"/>
</dbReference>
<dbReference type="GO" id="GO:0097152">
    <property type="term" value="P:mesenchymal cell apoptotic process"/>
    <property type="evidence" value="ECO:0000315"/>
    <property type="project" value="MGI"/>
</dbReference>
<dbReference type="GO" id="GO:0010463">
    <property type="term" value="P:mesenchymal cell proliferation"/>
    <property type="evidence" value="ECO:0000315"/>
    <property type="project" value="MGI"/>
</dbReference>
<dbReference type="GO" id="GO:0060916">
    <property type="term" value="P:mesenchymal cell proliferation involved in lung development"/>
    <property type="evidence" value="ECO:0000314"/>
    <property type="project" value="MGI"/>
</dbReference>
<dbReference type="GO" id="GO:0060783">
    <property type="term" value="P:mesenchymal smoothened signaling pathway involved in prostate gland development"/>
    <property type="evidence" value="ECO:0000315"/>
    <property type="project" value="MGI"/>
</dbReference>
<dbReference type="GO" id="GO:0060739">
    <property type="term" value="P:mesenchymal-epithelial cell signaling involved in prostate gland development"/>
    <property type="evidence" value="ECO:0000266"/>
    <property type="project" value="MGI"/>
</dbReference>
<dbReference type="GO" id="GO:0072205">
    <property type="term" value="P:metanephric collecting duct development"/>
    <property type="evidence" value="ECO:0007669"/>
    <property type="project" value="Ensembl"/>
</dbReference>
<dbReference type="GO" id="GO:0072136">
    <property type="term" value="P:metanephric mesenchymal cell proliferation involved in metanephros development"/>
    <property type="evidence" value="ECO:0000315"/>
    <property type="project" value="UniProtKB"/>
</dbReference>
<dbReference type="GO" id="GO:0001656">
    <property type="term" value="P:metanephros development"/>
    <property type="evidence" value="ECO:0000315"/>
    <property type="project" value="UniProtKB"/>
</dbReference>
<dbReference type="GO" id="GO:0030901">
    <property type="term" value="P:midbrain development"/>
    <property type="evidence" value="ECO:0000316"/>
    <property type="project" value="MGI"/>
</dbReference>
<dbReference type="GO" id="GO:0045445">
    <property type="term" value="P:myoblast differentiation"/>
    <property type="evidence" value="ECO:0000314"/>
    <property type="project" value="MGI"/>
</dbReference>
<dbReference type="GO" id="GO:0014902">
    <property type="term" value="P:myotube differentiation"/>
    <property type="evidence" value="ECO:0000315"/>
    <property type="project" value="MGI"/>
</dbReference>
<dbReference type="GO" id="GO:0046639">
    <property type="term" value="P:negative regulation of alpha-beta T cell differentiation"/>
    <property type="evidence" value="ECO:0000315"/>
    <property type="project" value="MGI"/>
</dbReference>
<dbReference type="GO" id="GO:0043066">
    <property type="term" value="P:negative regulation of apoptotic process"/>
    <property type="evidence" value="ECO:0000314"/>
    <property type="project" value="Roslin"/>
</dbReference>
<dbReference type="GO" id="GO:0090090">
    <property type="term" value="P:negative regulation of canonical Wnt signaling pathway"/>
    <property type="evidence" value="ECO:0000315"/>
    <property type="project" value="MGI"/>
</dbReference>
<dbReference type="GO" id="GO:0030336">
    <property type="term" value="P:negative regulation of cell migration"/>
    <property type="evidence" value="ECO:0000314"/>
    <property type="project" value="MGI"/>
</dbReference>
<dbReference type="GO" id="GO:0090370">
    <property type="term" value="P:negative regulation of cholesterol efflux"/>
    <property type="evidence" value="ECO:0000315"/>
    <property type="project" value="BHF-UCL"/>
</dbReference>
<dbReference type="GO" id="GO:1904339">
    <property type="term" value="P:negative regulation of dopaminergic neuron differentiation"/>
    <property type="evidence" value="ECO:0000315"/>
    <property type="project" value="ParkinsonsUK-UCL"/>
</dbReference>
<dbReference type="GO" id="GO:0010629">
    <property type="term" value="P:negative regulation of gene expression"/>
    <property type="evidence" value="ECO:0000315"/>
    <property type="project" value="UniProtKB"/>
</dbReference>
<dbReference type="GO" id="GO:2000357">
    <property type="term" value="P:negative regulation of kidney smooth muscle cell differentiation"/>
    <property type="evidence" value="ECO:0000314"/>
    <property type="project" value="UniProtKB"/>
</dbReference>
<dbReference type="GO" id="GO:2001054">
    <property type="term" value="P:negative regulation of mesenchymal cell apoptotic process"/>
    <property type="evidence" value="ECO:0000315"/>
    <property type="project" value="MGI"/>
</dbReference>
<dbReference type="GO" id="GO:0045665">
    <property type="term" value="P:negative regulation of neuron differentiation"/>
    <property type="evidence" value="ECO:0000314"/>
    <property type="project" value="MGI"/>
</dbReference>
<dbReference type="GO" id="GO:0032435">
    <property type="term" value="P:negative regulation of proteasomal ubiquitin-dependent protein catabolic process"/>
    <property type="evidence" value="ECO:0000315"/>
    <property type="project" value="MGI"/>
</dbReference>
<dbReference type="GO" id="GO:0042177">
    <property type="term" value="P:negative regulation of protein catabolic process"/>
    <property type="evidence" value="ECO:0000315"/>
    <property type="project" value="MGI"/>
</dbReference>
<dbReference type="GO" id="GO:0033085">
    <property type="term" value="P:negative regulation of T cell differentiation in thymus"/>
    <property type="evidence" value="ECO:0000315"/>
    <property type="project" value="MGI"/>
</dbReference>
<dbReference type="GO" id="GO:0042130">
    <property type="term" value="P:negative regulation of T cell proliferation"/>
    <property type="evidence" value="ECO:0000315"/>
    <property type="project" value="MGI"/>
</dbReference>
<dbReference type="GO" id="GO:0000122">
    <property type="term" value="P:negative regulation of transcription by RNA polymerase II"/>
    <property type="evidence" value="ECO:0000314"/>
    <property type="project" value="MGI"/>
</dbReference>
<dbReference type="GO" id="GO:0034244">
    <property type="term" value="P:negative regulation of transcription elongation by RNA polymerase II"/>
    <property type="evidence" value="ECO:0000314"/>
    <property type="project" value="MGI"/>
</dbReference>
<dbReference type="GO" id="GO:2000062">
    <property type="term" value="P:negative regulation of ureter smooth muscle cell differentiation"/>
    <property type="evidence" value="ECO:0000314"/>
    <property type="project" value="UniProtKB"/>
</dbReference>
<dbReference type="GO" id="GO:0030178">
    <property type="term" value="P:negative regulation of Wnt signaling pathway"/>
    <property type="evidence" value="ECO:0000314"/>
    <property type="project" value="MGI"/>
</dbReference>
<dbReference type="GO" id="GO:0045060">
    <property type="term" value="P:negative thymic T cell selection"/>
    <property type="evidence" value="ECO:0000315"/>
    <property type="project" value="BHF-UCL"/>
</dbReference>
<dbReference type="GO" id="GO:0001755">
    <property type="term" value="P:neural crest cell migration"/>
    <property type="evidence" value="ECO:0000315"/>
    <property type="project" value="MGI"/>
</dbReference>
<dbReference type="GO" id="GO:0007405">
    <property type="term" value="P:neuroblast proliferation"/>
    <property type="evidence" value="ECO:0000314"/>
    <property type="project" value="MGI"/>
</dbReference>
<dbReference type="GO" id="GO:0030182">
    <property type="term" value="P:neuron differentiation"/>
    <property type="evidence" value="ECO:0000314"/>
    <property type="project" value="MGI"/>
</dbReference>
<dbReference type="GO" id="GO:0048663">
    <property type="term" value="P:neuron fate commitment"/>
    <property type="evidence" value="ECO:0000315"/>
    <property type="project" value="MGI"/>
</dbReference>
<dbReference type="GO" id="GO:0042476">
    <property type="term" value="P:odontogenesis"/>
    <property type="evidence" value="ECO:0000314"/>
    <property type="project" value="MGI"/>
</dbReference>
<dbReference type="GO" id="GO:0042475">
    <property type="term" value="P:odontogenesis of dentin-containing tooth"/>
    <property type="evidence" value="ECO:0000315"/>
    <property type="project" value="MGI"/>
</dbReference>
<dbReference type="GO" id="GO:0014003">
    <property type="term" value="P:oligodendrocyte development"/>
    <property type="evidence" value="ECO:0000314"/>
    <property type="project" value="MGI"/>
</dbReference>
<dbReference type="GO" id="GO:0048709">
    <property type="term" value="P:oligodendrocyte differentiation"/>
    <property type="evidence" value="ECO:0000316"/>
    <property type="project" value="MGI"/>
</dbReference>
<dbReference type="GO" id="GO:0002076">
    <property type="term" value="P:osteoblast development"/>
    <property type="evidence" value="ECO:0000314"/>
    <property type="project" value="MGI"/>
</dbReference>
<dbReference type="GO" id="GO:0031016">
    <property type="term" value="P:pancreas development"/>
    <property type="evidence" value="ECO:0000315"/>
    <property type="project" value="MGI"/>
</dbReference>
<dbReference type="GO" id="GO:0007389">
    <property type="term" value="P:pattern specification process"/>
    <property type="evidence" value="ECO:0000315"/>
    <property type="project" value="MGI"/>
</dbReference>
<dbReference type="GO" id="GO:0009949">
    <property type="term" value="P:polarity specification of anterior/posterior axis"/>
    <property type="evidence" value="ECO:0000315"/>
    <property type="project" value="Roslin"/>
</dbReference>
<dbReference type="GO" id="GO:0046638">
    <property type="term" value="P:positive regulation of alpha-beta T cell differentiation"/>
    <property type="evidence" value="ECO:0000315"/>
    <property type="project" value="BHF-UCL"/>
</dbReference>
<dbReference type="GO" id="GO:0048711">
    <property type="term" value="P:positive regulation of astrocyte differentiation"/>
    <property type="evidence" value="ECO:0000315"/>
    <property type="project" value="MGI"/>
</dbReference>
<dbReference type="GO" id="GO:0051781">
    <property type="term" value="P:positive regulation of cell division"/>
    <property type="evidence" value="ECO:0007669"/>
    <property type="project" value="Ensembl"/>
</dbReference>
<dbReference type="GO" id="GO:0008284">
    <property type="term" value="P:positive regulation of cell population proliferation"/>
    <property type="evidence" value="ECO:0000314"/>
    <property type="project" value="MGI"/>
</dbReference>
<dbReference type="GO" id="GO:0021940">
    <property type="term" value="P:positive regulation of cerebellar granule cell precursor proliferation"/>
    <property type="evidence" value="ECO:0000314"/>
    <property type="project" value="MGI"/>
</dbReference>
<dbReference type="GO" id="GO:0045893">
    <property type="term" value="P:positive regulation of DNA-templated transcription"/>
    <property type="evidence" value="ECO:0000314"/>
    <property type="project" value="UniProtKB"/>
</dbReference>
<dbReference type="GO" id="GO:0050679">
    <property type="term" value="P:positive regulation of epithelial cell proliferation"/>
    <property type="evidence" value="ECO:0000315"/>
    <property type="project" value="MGI"/>
</dbReference>
<dbReference type="GO" id="GO:0060769">
    <property type="term" value="P:positive regulation of epithelial cell proliferation involved in prostate gland development"/>
    <property type="evidence" value="ECO:0000315"/>
    <property type="project" value="MGI"/>
</dbReference>
<dbReference type="GO" id="GO:0010628">
    <property type="term" value="P:positive regulation of gene expression"/>
    <property type="evidence" value="ECO:0000315"/>
    <property type="project" value="UniProtKB"/>
</dbReference>
<dbReference type="GO" id="GO:0033092">
    <property type="term" value="P:positive regulation of immature T cell proliferation in thymus"/>
    <property type="evidence" value="ECO:0000315"/>
    <property type="project" value="BHF-UCL"/>
</dbReference>
<dbReference type="GO" id="GO:2000358">
    <property type="term" value="P:positive regulation of kidney smooth muscle cell differentiation"/>
    <property type="evidence" value="ECO:0000314"/>
    <property type="project" value="UniProtKB"/>
</dbReference>
<dbReference type="GO" id="GO:0002053">
    <property type="term" value="P:positive regulation of mesenchymal cell proliferation"/>
    <property type="evidence" value="ECO:0000315"/>
    <property type="project" value="MGI"/>
</dbReference>
<dbReference type="GO" id="GO:2000729">
    <property type="term" value="P:positive regulation of mesenchymal cell proliferation involved in ureter development"/>
    <property type="evidence" value="ECO:0000315"/>
    <property type="project" value="UniProtKB"/>
</dbReference>
<dbReference type="GO" id="GO:0002052">
    <property type="term" value="P:positive regulation of neuroblast proliferation"/>
    <property type="evidence" value="ECO:0000314"/>
    <property type="project" value="MGI"/>
</dbReference>
<dbReference type="GO" id="GO:0048714">
    <property type="term" value="P:positive regulation of oligodendrocyte differentiation"/>
    <property type="evidence" value="ECO:0000314"/>
    <property type="project" value="MGI"/>
</dbReference>
<dbReference type="GO" id="GO:0042307">
    <property type="term" value="P:positive regulation of protein import into nucleus"/>
    <property type="evidence" value="ECO:0000316"/>
    <property type="project" value="MGI"/>
</dbReference>
<dbReference type="GO" id="GO:0061189">
    <property type="term" value="P:positive regulation of sclerotome development"/>
    <property type="evidence" value="ECO:0007669"/>
    <property type="project" value="Ensembl"/>
</dbReference>
<dbReference type="GO" id="GO:0014858">
    <property type="term" value="P:positive regulation of skeletal muscle cell proliferation"/>
    <property type="evidence" value="ECO:0000315"/>
    <property type="project" value="MGI"/>
</dbReference>
<dbReference type="GO" id="GO:0048643">
    <property type="term" value="P:positive regulation of skeletal muscle tissue development"/>
    <property type="evidence" value="ECO:0000315"/>
    <property type="project" value="MGI"/>
</dbReference>
<dbReference type="GO" id="GO:0045880">
    <property type="term" value="P:positive regulation of smoothened signaling pathway"/>
    <property type="evidence" value="ECO:0000250"/>
    <property type="project" value="UniProtKB"/>
</dbReference>
<dbReference type="GO" id="GO:0051155">
    <property type="term" value="P:positive regulation of striated muscle cell differentiation"/>
    <property type="evidence" value="ECO:0000315"/>
    <property type="project" value="MGI"/>
</dbReference>
<dbReference type="GO" id="GO:0033089">
    <property type="term" value="P:positive regulation of T cell differentiation in thymus"/>
    <property type="evidence" value="ECO:0000315"/>
    <property type="project" value="BHF-UCL"/>
</dbReference>
<dbReference type="GO" id="GO:0045944">
    <property type="term" value="P:positive regulation of transcription by RNA polymerase II"/>
    <property type="evidence" value="ECO:0000314"/>
    <property type="project" value="BHF-UCL"/>
</dbReference>
<dbReference type="GO" id="GO:2000063">
    <property type="term" value="P:positive regulation of ureter smooth muscle cell differentiation"/>
    <property type="evidence" value="ECO:0000315"/>
    <property type="project" value="UniProtKB"/>
</dbReference>
<dbReference type="GO" id="GO:0030177">
    <property type="term" value="P:positive regulation of Wnt signaling pathway"/>
    <property type="evidence" value="ECO:0000315"/>
    <property type="project" value="MGI"/>
</dbReference>
<dbReference type="GO" id="GO:0045059">
    <property type="term" value="P:positive thymic T cell selection"/>
    <property type="evidence" value="ECO:0000315"/>
    <property type="project" value="BHF-UCL"/>
</dbReference>
<dbReference type="GO" id="GO:0060516">
    <property type="term" value="P:primary prostatic bud elongation"/>
    <property type="evidence" value="ECO:0000314"/>
    <property type="project" value="MGI"/>
</dbReference>
<dbReference type="GO" id="GO:0060523">
    <property type="term" value="P:prostate epithelial cord elongation"/>
    <property type="evidence" value="ECO:0000314"/>
    <property type="project" value="MGI"/>
</dbReference>
<dbReference type="GO" id="GO:0030850">
    <property type="term" value="P:prostate gland development"/>
    <property type="evidence" value="ECO:0000315"/>
    <property type="project" value="MGI"/>
</dbReference>
<dbReference type="GO" id="GO:0016540">
    <property type="term" value="P:protein autoprocessing"/>
    <property type="evidence" value="ECO:0007669"/>
    <property type="project" value="InterPro"/>
</dbReference>
<dbReference type="GO" id="GO:0006606">
    <property type="term" value="P:protein import into nucleus"/>
    <property type="evidence" value="ECO:0000316"/>
    <property type="project" value="MGI"/>
</dbReference>
<dbReference type="GO" id="GO:0034504">
    <property type="term" value="P:protein localization to nucleus"/>
    <property type="evidence" value="ECO:0000314"/>
    <property type="project" value="MGI"/>
</dbReference>
<dbReference type="GO" id="GO:0006355">
    <property type="term" value="P:regulation of DNA-templated transcription"/>
    <property type="evidence" value="ECO:0000315"/>
    <property type="project" value="MGI"/>
</dbReference>
<dbReference type="GO" id="GO:0060768">
    <property type="term" value="P:regulation of epithelial cell proliferation involved in prostate gland development"/>
    <property type="evidence" value="ECO:0000315"/>
    <property type="project" value="MGI"/>
</dbReference>
<dbReference type="GO" id="GO:0010468">
    <property type="term" value="P:regulation of gene expression"/>
    <property type="evidence" value="ECO:0000314"/>
    <property type="project" value="MGI"/>
</dbReference>
<dbReference type="GO" id="GO:0060251">
    <property type="term" value="P:regulation of glial cell proliferation"/>
    <property type="evidence" value="ECO:0000314"/>
    <property type="project" value="MGI"/>
</dbReference>
<dbReference type="GO" id="GO:0060782">
    <property type="term" value="P:regulation of mesenchymal cell proliferation involved in prostate gland development"/>
    <property type="evidence" value="ECO:0000315"/>
    <property type="project" value="MGI"/>
</dbReference>
<dbReference type="GO" id="GO:0042481">
    <property type="term" value="P:regulation of odontogenesis"/>
    <property type="evidence" value="ECO:0000315"/>
    <property type="project" value="BHF-UCL"/>
</dbReference>
<dbReference type="GO" id="GO:0060685">
    <property type="term" value="P:regulation of prostatic bud formation"/>
    <property type="evidence" value="ECO:0000314"/>
    <property type="project" value="MGI"/>
</dbReference>
<dbReference type="GO" id="GO:0030162">
    <property type="term" value="P:regulation of proteolysis"/>
    <property type="evidence" value="ECO:0000314"/>
    <property type="project" value="MGI"/>
</dbReference>
<dbReference type="GO" id="GO:0072091">
    <property type="term" value="P:regulation of stem cell proliferation"/>
    <property type="evidence" value="ECO:0000315"/>
    <property type="project" value="MGI"/>
</dbReference>
<dbReference type="GO" id="GO:0030323">
    <property type="term" value="P:respiratory tube development"/>
    <property type="evidence" value="ECO:0000315"/>
    <property type="project" value="MGI"/>
</dbReference>
<dbReference type="GO" id="GO:0060458">
    <property type="term" value="P:right lung development"/>
    <property type="evidence" value="ECO:0000315"/>
    <property type="project" value="MGI"/>
</dbReference>
<dbReference type="GO" id="GO:0060021">
    <property type="term" value="P:roof of mouth development"/>
    <property type="evidence" value="ECO:0000315"/>
    <property type="project" value="MGI"/>
</dbReference>
<dbReference type="GO" id="GO:0060662">
    <property type="term" value="P:salivary gland cavitation"/>
    <property type="evidence" value="ECO:0000314"/>
    <property type="project" value="MGI"/>
</dbReference>
<dbReference type="GO" id="GO:0097264">
    <property type="term" value="P:self proteolysis"/>
    <property type="evidence" value="ECO:0000314"/>
    <property type="project" value="UniProtKB"/>
</dbReference>
<dbReference type="GO" id="GO:0007165">
    <property type="term" value="P:signal transduction"/>
    <property type="evidence" value="ECO:0000304"/>
    <property type="project" value="MGI"/>
</dbReference>
<dbReference type="GO" id="GO:0014856">
    <property type="term" value="P:skeletal muscle cell proliferation"/>
    <property type="evidence" value="ECO:0000315"/>
    <property type="project" value="MGI"/>
</dbReference>
<dbReference type="GO" id="GO:0098528">
    <property type="term" value="P:skeletal muscle fiber differentiation"/>
    <property type="evidence" value="ECO:0000315"/>
    <property type="project" value="MGI"/>
</dbReference>
<dbReference type="GO" id="GO:0007519">
    <property type="term" value="P:skeletal muscle tissue development"/>
    <property type="evidence" value="ECO:0000315"/>
    <property type="project" value="MGI"/>
</dbReference>
<dbReference type="GO" id="GO:0043588">
    <property type="term" value="P:skin development"/>
    <property type="evidence" value="ECO:0000315"/>
    <property type="project" value="MGI"/>
</dbReference>
<dbReference type="GO" id="GO:0048745">
    <property type="term" value="P:smooth muscle tissue development"/>
    <property type="evidence" value="ECO:0007669"/>
    <property type="project" value="Ensembl"/>
</dbReference>
<dbReference type="GO" id="GO:0007224">
    <property type="term" value="P:smoothened signaling pathway"/>
    <property type="evidence" value="ECO:0000314"/>
    <property type="project" value="MGI"/>
</dbReference>
<dbReference type="GO" id="GO:0061053">
    <property type="term" value="P:somite development"/>
    <property type="evidence" value="ECO:0000315"/>
    <property type="project" value="BHF-UCL"/>
</dbReference>
<dbReference type="GO" id="GO:0021513">
    <property type="term" value="P:spinal cord dorsal/ventral patterning"/>
    <property type="evidence" value="ECO:0000315"/>
    <property type="project" value="MGI"/>
</dbReference>
<dbReference type="GO" id="GO:0021522">
    <property type="term" value="P:spinal cord motor neuron differentiation"/>
    <property type="evidence" value="ECO:0000316"/>
    <property type="project" value="MGI"/>
</dbReference>
<dbReference type="GO" id="GO:0048864">
    <property type="term" value="P:stem cell development"/>
    <property type="evidence" value="ECO:0000315"/>
    <property type="project" value="BHF-UCL"/>
</dbReference>
<dbReference type="GO" id="GO:0072089">
    <property type="term" value="P:stem cell proliferation"/>
    <property type="evidence" value="ECO:0000314"/>
    <property type="project" value="MGI"/>
</dbReference>
<dbReference type="GO" id="GO:0051146">
    <property type="term" value="P:striated muscle cell differentiation"/>
    <property type="evidence" value="ECO:0000314"/>
    <property type="project" value="MGI"/>
</dbReference>
<dbReference type="GO" id="GO:0014706">
    <property type="term" value="P:striated muscle tissue development"/>
    <property type="evidence" value="ECO:0000315"/>
    <property type="project" value="MGI"/>
</dbReference>
<dbReference type="GO" id="GO:0033077">
    <property type="term" value="P:T cell differentiation in thymus"/>
    <property type="evidence" value="ECO:0000315"/>
    <property type="project" value="BHF-UCL"/>
</dbReference>
<dbReference type="GO" id="GO:0042098">
    <property type="term" value="P:T cell proliferation"/>
    <property type="evidence" value="ECO:0000315"/>
    <property type="project" value="MGI"/>
</dbReference>
<dbReference type="GO" id="GO:0021978">
    <property type="term" value="P:telencephalon regionalization"/>
    <property type="evidence" value="ECO:0000315"/>
    <property type="project" value="MGI"/>
</dbReference>
<dbReference type="GO" id="GO:0021794">
    <property type="term" value="P:thalamus development"/>
    <property type="evidence" value="ECO:0000315"/>
    <property type="project" value="MGI"/>
</dbReference>
<dbReference type="GO" id="GO:0048538">
    <property type="term" value="P:thymus development"/>
    <property type="evidence" value="ECO:0000315"/>
    <property type="project" value="BHF-UCL"/>
</dbReference>
<dbReference type="GO" id="GO:0030878">
    <property type="term" value="P:thyroid gland development"/>
    <property type="evidence" value="ECO:0000315"/>
    <property type="project" value="MGI"/>
</dbReference>
<dbReference type="GO" id="GO:0060438">
    <property type="term" value="P:trachea development"/>
    <property type="evidence" value="ECO:0000315"/>
    <property type="project" value="MGI"/>
</dbReference>
<dbReference type="GO" id="GO:0060439">
    <property type="term" value="P:trachea morphogenesis"/>
    <property type="evidence" value="ECO:0000315"/>
    <property type="project" value="MGI"/>
</dbReference>
<dbReference type="GO" id="GO:1905327">
    <property type="term" value="P:tracheoesophageal septum formation"/>
    <property type="evidence" value="ECO:0000315"/>
    <property type="project" value="MGI"/>
</dbReference>
<dbReference type="GO" id="GO:0036484">
    <property type="term" value="P:trunk neural crest cell migration"/>
    <property type="evidence" value="ECO:0000314"/>
    <property type="project" value="MGI"/>
</dbReference>
<dbReference type="GO" id="GO:0001944">
    <property type="term" value="P:vasculature development"/>
    <property type="evidence" value="ECO:0000315"/>
    <property type="project" value="MGI"/>
</dbReference>
<dbReference type="GO" id="GO:0001570">
    <property type="term" value="P:vasculogenesis"/>
    <property type="evidence" value="ECO:0000314"/>
    <property type="project" value="MGI"/>
</dbReference>
<dbReference type="GO" id="GO:0060979">
    <property type="term" value="P:vasculogenesis involved in coronary vascular morphogenesis"/>
    <property type="evidence" value="ECO:0000304"/>
    <property type="project" value="DFLAT"/>
</dbReference>
<dbReference type="GO" id="GO:0021521">
    <property type="term" value="P:ventral spinal cord interneuron specification"/>
    <property type="evidence" value="ECO:0000266"/>
    <property type="project" value="MGI"/>
</dbReference>
<dbReference type="CDD" id="cd00081">
    <property type="entry name" value="Hint"/>
    <property type="match status" value="1"/>
</dbReference>
<dbReference type="FunFam" id="2.170.16.10:FF:000001">
    <property type="entry name" value="Indian hedgehog"/>
    <property type="match status" value="1"/>
</dbReference>
<dbReference type="FunFam" id="3.30.1380.10:FF:000001">
    <property type="entry name" value="Indian hedgehog"/>
    <property type="match status" value="1"/>
</dbReference>
<dbReference type="Gene3D" id="3.30.1380.10">
    <property type="match status" value="1"/>
</dbReference>
<dbReference type="Gene3D" id="2.170.16.10">
    <property type="entry name" value="Hedgehog/Intein (Hint) domain"/>
    <property type="match status" value="1"/>
</dbReference>
<dbReference type="InterPro" id="IPR001657">
    <property type="entry name" value="Hedgehog"/>
</dbReference>
<dbReference type="InterPro" id="IPR001767">
    <property type="entry name" value="Hedgehog_Hint"/>
</dbReference>
<dbReference type="InterPro" id="IPR009045">
    <property type="entry name" value="Hedgehog_sig/DD-Pept_Zn-bd_sf"/>
</dbReference>
<dbReference type="InterPro" id="IPR050387">
    <property type="entry name" value="Hedgehog_Signaling"/>
</dbReference>
<dbReference type="InterPro" id="IPR000320">
    <property type="entry name" value="Hedgehog_signalling_dom"/>
</dbReference>
<dbReference type="InterPro" id="IPR003586">
    <property type="entry name" value="Hint_dom_C"/>
</dbReference>
<dbReference type="InterPro" id="IPR003587">
    <property type="entry name" value="Hint_dom_N"/>
</dbReference>
<dbReference type="InterPro" id="IPR036844">
    <property type="entry name" value="Hint_dom_sf"/>
</dbReference>
<dbReference type="InterPro" id="IPR006141">
    <property type="entry name" value="Intein_N"/>
</dbReference>
<dbReference type="PANTHER" id="PTHR11889">
    <property type="entry name" value="HEDGEHOG"/>
    <property type="match status" value="1"/>
</dbReference>
<dbReference type="PANTHER" id="PTHR11889:SF36">
    <property type="entry name" value="SONIC HEDGEHOG PROTEIN"/>
    <property type="match status" value="1"/>
</dbReference>
<dbReference type="Pfam" id="PF01085">
    <property type="entry name" value="HH_signal"/>
    <property type="match status" value="1"/>
</dbReference>
<dbReference type="Pfam" id="PF01079">
    <property type="entry name" value="Hint"/>
    <property type="match status" value="1"/>
</dbReference>
<dbReference type="PIRSF" id="PIRSF009400">
    <property type="entry name" value="Peptidase_C46"/>
    <property type="match status" value="1"/>
</dbReference>
<dbReference type="PRINTS" id="PR00632">
    <property type="entry name" value="SONICHHOG"/>
</dbReference>
<dbReference type="SMART" id="SM00305">
    <property type="entry name" value="HintC"/>
    <property type="match status" value="1"/>
</dbReference>
<dbReference type="SMART" id="SM00306">
    <property type="entry name" value="HintN"/>
    <property type="match status" value="1"/>
</dbReference>
<dbReference type="SUPFAM" id="SSF55166">
    <property type="entry name" value="Hedgehog/DD-peptidase"/>
    <property type="match status" value="1"/>
</dbReference>
<dbReference type="SUPFAM" id="SSF51294">
    <property type="entry name" value="Hedgehog/intein (Hint) domain"/>
    <property type="match status" value="1"/>
</dbReference>
<dbReference type="PROSITE" id="PS50817">
    <property type="entry name" value="INTEIN_N_TER"/>
    <property type="match status" value="1"/>
</dbReference>
<reference key="1">
    <citation type="journal article" date="1993" name="Cell">
        <title>Sonic hedgehog, a member of a family of putative signaling molecules, is implicated in the regulation of CNS polarity.</title>
        <authorList>
            <person name="Echelard Y."/>
            <person name="Epstein D.J."/>
            <person name="St Jacques B."/>
            <person name="Shen L."/>
            <person name="Mohler J."/>
            <person name="McMahon J.A."/>
            <person name="McMahon A.P."/>
        </authorList>
    </citation>
    <scope>NUCLEOTIDE SEQUENCE [MRNA]</scope>
    <source>
        <strain>C57BL/6J</strain>
        <tissue>Embryo</tissue>
    </source>
</reference>
<reference key="2">
    <citation type="submission" date="1997-11" db="EMBL/GenBank/DDBJ databases">
        <authorList>
            <person name="McMahon A.P."/>
        </authorList>
    </citation>
    <scope>SEQUENCE REVISION TO 122</scope>
</reference>
<reference key="3">
    <citation type="journal article" date="1994" name="Development">
        <title>Products, genetic linkage and limb patterning activity of a murine hedgehog gene.</title>
        <authorList>
            <person name="Chang D.T."/>
            <person name="Lopez A."/>
            <person name="von Kessler D.P."/>
            <person name="Chiang C."/>
            <person name="Simandl B.K."/>
            <person name="Zhao R."/>
            <person name="Seldin M.F."/>
            <person name="Fallon J.F."/>
            <person name="Beachy P.A."/>
        </authorList>
    </citation>
    <scope>NUCLEOTIDE SEQUENCE [MRNA]</scope>
    <scope>PROTEOLYTIC PROCESSING</scope>
    <scope>AUTOCATALYTIC CLEAVAGE</scope>
</reference>
<reference key="4">
    <citation type="journal article" date="2005" name="Science">
        <title>The transcriptional landscape of the mammalian genome.</title>
        <authorList>
            <person name="Carninci P."/>
            <person name="Kasukawa T."/>
            <person name="Katayama S."/>
            <person name="Gough J."/>
            <person name="Frith M.C."/>
            <person name="Maeda N."/>
            <person name="Oyama R."/>
            <person name="Ravasi T."/>
            <person name="Lenhard B."/>
            <person name="Wells C."/>
            <person name="Kodzius R."/>
            <person name="Shimokawa K."/>
            <person name="Bajic V.B."/>
            <person name="Brenner S.E."/>
            <person name="Batalov S."/>
            <person name="Forrest A.R."/>
            <person name="Zavolan M."/>
            <person name="Davis M.J."/>
            <person name="Wilming L.G."/>
            <person name="Aidinis V."/>
            <person name="Allen J.E."/>
            <person name="Ambesi-Impiombato A."/>
            <person name="Apweiler R."/>
            <person name="Aturaliya R.N."/>
            <person name="Bailey T.L."/>
            <person name="Bansal M."/>
            <person name="Baxter L."/>
            <person name="Beisel K.W."/>
            <person name="Bersano T."/>
            <person name="Bono H."/>
            <person name="Chalk A.M."/>
            <person name="Chiu K.P."/>
            <person name="Choudhary V."/>
            <person name="Christoffels A."/>
            <person name="Clutterbuck D.R."/>
            <person name="Crowe M.L."/>
            <person name="Dalla E."/>
            <person name="Dalrymple B.P."/>
            <person name="de Bono B."/>
            <person name="Della Gatta G."/>
            <person name="di Bernardo D."/>
            <person name="Down T."/>
            <person name="Engstrom P."/>
            <person name="Fagiolini M."/>
            <person name="Faulkner G."/>
            <person name="Fletcher C.F."/>
            <person name="Fukushima T."/>
            <person name="Furuno M."/>
            <person name="Futaki S."/>
            <person name="Gariboldi M."/>
            <person name="Georgii-Hemming P."/>
            <person name="Gingeras T.R."/>
            <person name="Gojobori T."/>
            <person name="Green R.E."/>
            <person name="Gustincich S."/>
            <person name="Harbers M."/>
            <person name="Hayashi Y."/>
            <person name="Hensch T.K."/>
            <person name="Hirokawa N."/>
            <person name="Hill D."/>
            <person name="Huminiecki L."/>
            <person name="Iacono M."/>
            <person name="Ikeo K."/>
            <person name="Iwama A."/>
            <person name="Ishikawa T."/>
            <person name="Jakt M."/>
            <person name="Kanapin A."/>
            <person name="Katoh M."/>
            <person name="Kawasawa Y."/>
            <person name="Kelso J."/>
            <person name="Kitamura H."/>
            <person name="Kitano H."/>
            <person name="Kollias G."/>
            <person name="Krishnan S.P."/>
            <person name="Kruger A."/>
            <person name="Kummerfeld S.K."/>
            <person name="Kurochkin I.V."/>
            <person name="Lareau L.F."/>
            <person name="Lazarevic D."/>
            <person name="Lipovich L."/>
            <person name="Liu J."/>
            <person name="Liuni S."/>
            <person name="McWilliam S."/>
            <person name="Madan Babu M."/>
            <person name="Madera M."/>
            <person name="Marchionni L."/>
            <person name="Matsuda H."/>
            <person name="Matsuzawa S."/>
            <person name="Miki H."/>
            <person name="Mignone F."/>
            <person name="Miyake S."/>
            <person name="Morris K."/>
            <person name="Mottagui-Tabar S."/>
            <person name="Mulder N."/>
            <person name="Nakano N."/>
            <person name="Nakauchi H."/>
            <person name="Ng P."/>
            <person name="Nilsson R."/>
            <person name="Nishiguchi S."/>
            <person name="Nishikawa S."/>
            <person name="Nori F."/>
            <person name="Ohara O."/>
            <person name="Okazaki Y."/>
            <person name="Orlando V."/>
            <person name="Pang K.C."/>
            <person name="Pavan W.J."/>
            <person name="Pavesi G."/>
            <person name="Pesole G."/>
            <person name="Petrovsky N."/>
            <person name="Piazza S."/>
            <person name="Reed J."/>
            <person name="Reid J.F."/>
            <person name="Ring B.Z."/>
            <person name="Ringwald M."/>
            <person name="Rost B."/>
            <person name="Ruan Y."/>
            <person name="Salzberg S.L."/>
            <person name="Sandelin A."/>
            <person name="Schneider C."/>
            <person name="Schoenbach C."/>
            <person name="Sekiguchi K."/>
            <person name="Semple C.A."/>
            <person name="Seno S."/>
            <person name="Sessa L."/>
            <person name="Sheng Y."/>
            <person name="Shibata Y."/>
            <person name="Shimada H."/>
            <person name="Shimada K."/>
            <person name="Silva D."/>
            <person name="Sinclair B."/>
            <person name="Sperling S."/>
            <person name="Stupka E."/>
            <person name="Sugiura K."/>
            <person name="Sultana R."/>
            <person name="Takenaka Y."/>
            <person name="Taki K."/>
            <person name="Tammoja K."/>
            <person name="Tan S.L."/>
            <person name="Tang S."/>
            <person name="Taylor M.S."/>
            <person name="Tegner J."/>
            <person name="Teichmann S.A."/>
            <person name="Ueda H.R."/>
            <person name="van Nimwegen E."/>
            <person name="Verardo R."/>
            <person name="Wei C.L."/>
            <person name="Yagi K."/>
            <person name="Yamanishi H."/>
            <person name="Zabarovsky E."/>
            <person name="Zhu S."/>
            <person name="Zimmer A."/>
            <person name="Hide W."/>
            <person name="Bult C."/>
            <person name="Grimmond S.M."/>
            <person name="Teasdale R.D."/>
            <person name="Liu E.T."/>
            <person name="Brusic V."/>
            <person name="Quackenbush J."/>
            <person name="Wahlestedt C."/>
            <person name="Mattick J.S."/>
            <person name="Hume D.A."/>
            <person name="Kai C."/>
            <person name="Sasaki D."/>
            <person name="Tomaru Y."/>
            <person name="Fukuda S."/>
            <person name="Kanamori-Katayama M."/>
            <person name="Suzuki M."/>
            <person name="Aoki J."/>
            <person name="Arakawa T."/>
            <person name="Iida J."/>
            <person name="Imamura K."/>
            <person name="Itoh M."/>
            <person name="Kato T."/>
            <person name="Kawaji H."/>
            <person name="Kawagashira N."/>
            <person name="Kawashima T."/>
            <person name="Kojima M."/>
            <person name="Kondo S."/>
            <person name="Konno H."/>
            <person name="Nakano K."/>
            <person name="Ninomiya N."/>
            <person name="Nishio T."/>
            <person name="Okada M."/>
            <person name="Plessy C."/>
            <person name="Shibata K."/>
            <person name="Shiraki T."/>
            <person name="Suzuki S."/>
            <person name="Tagami M."/>
            <person name="Waki K."/>
            <person name="Watahiki A."/>
            <person name="Okamura-Oho Y."/>
            <person name="Suzuki H."/>
            <person name="Kawai J."/>
            <person name="Hayashizaki Y."/>
        </authorList>
    </citation>
    <scope>NUCLEOTIDE SEQUENCE [LARGE SCALE MRNA]</scope>
    <source>
        <strain>C57BL/6J</strain>
    </source>
</reference>
<reference key="5">
    <citation type="journal article" date="2004" name="Genome Res.">
        <title>The status, quality, and expansion of the NIH full-length cDNA project: the Mammalian Gene Collection (MGC).</title>
        <authorList>
            <consortium name="The MGC Project Team"/>
        </authorList>
    </citation>
    <scope>NUCLEOTIDE SEQUENCE [LARGE SCALE MRNA]</scope>
    <source>
        <tissue>Limb</tissue>
    </source>
</reference>
<reference key="6">
    <citation type="journal article" date="1995" name="Mol. Cell. Biol.">
        <title>Proteolytic processing yields two secreted forms of sonic hedgehog.</title>
        <authorList>
            <person name="Bumcrot D.A."/>
            <person name="Takada R."/>
            <person name="McMahon A.P."/>
        </authorList>
    </citation>
    <scope>PROTEOLYTIC PROCESSING</scope>
    <scope>GLYCOSYLATION</scope>
    <scope>SUBCELLULAR LOCATION</scope>
</reference>
<reference key="7">
    <citation type="journal article" date="1995" name="Cell">
        <title>Floor plate and motor neuron induction by different concentrations of the amino-terminal cleavage product of sonic hedgehog autoproteolysis.</title>
        <authorList>
            <person name="Roelink H."/>
            <person name="Porter J.A."/>
            <person name="Chiang C."/>
            <person name="Tanabe Y."/>
            <person name="Chang D.T."/>
            <person name="Beachy P.A."/>
            <person name="Jessell T.M."/>
        </authorList>
    </citation>
    <scope>FUNCTION</scope>
    <scope>PROTEOLYTIC PROCESSING</scope>
    <scope>AUTOCATALYTIC CLEAVAGE</scope>
</reference>
<reference key="8">
    <citation type="journal article" date="1996" name="Science">
        <title>Cholesterol modification of hedgehog signaling proteins in animal development.</title>
        <authorList>
            <person name="Porter J.A."/>
            <person name="Young K.E."/>
            <person name="Beachy P.A."/>
        </authorList>
    </citation>
    <scope>CHOLESTERYLATION AT GLY-198</scope>
    <scope>FUNCTION</scope>
    <scope>CATALYTIC ACTIVITY</scope>
</reference>
<reference key="9">
    <citation type="journal article" date="2001" name="Science">
        <title>Skinny hedgehog, an acyltransferase required for palmitoylation and activity of the hedgehog signal.</title>
        <authorList>
            <person name="Chamoun Z."/>
            <person name="Mann R.K."/>
            <person name="Nellen D."/>
            <person name="von Kessler D.P."/>
            <person name="Bellotto M."/>
            <person name="Beachy P.A."/>
            <person name="Basler K."/>
        </authorList>
    </citation>
    <scope>PALMITOYLATION AT CYS-25</scope>
    <scope>MUTAGENESIS OF CYS-25</scope>
</reference>
<reference key="10">
    <citation type="journal article" date="2001" name="Mol. Cell">
        <title>A hedgehog-insensitive form of patched provides evidence for direct long-range morphogen activity of sonic hedgehog in the neural tube.</title>
        <authorList>
            <person name="Briscoe J."/>
            <person name="Chen Y."/>
            <person name="Jessell T.M."/>
            <person name="Struhl G."/>
        </authorList>
    </citation>
    <scope>FUNCTION</scope>
</reference>
<reference key="11">
    <citation type="journal article" date="2003" name="Neuron">
        <title>RORalpha coordinates reciprocal signaling in cerebellar development through sonic hedgehog and calcium-dependent pathways.</title>
        <authorList>
            <person name="Gold D.A."/>
            <person name="Baek S.H."/>
            <person name="Schork N.J."/>
            <person name="Rose D.W."/>
            <person name="Larsen D.D."/>
            <person name="Sachs B.D."/>
            <person name="Rosenfeld M.G."/>
            <person name="Hamilton B.A."/>
        </authorList>
    </citation>
    <scope>FUNCTION IN CEREBELLAR DEVELOPMENT</scope>
</reference>
<reference key="12">
    <citation type="journal article" date="2003" name="Cell">
        <title>The morphogen sonic hedgehog is an axonal chemoattractant that collaborates with netrin-1 in midline axon guidance.</title>
        <authorList>
            <person name="Charron F."/>
            <person name="Stein E."/>
            <person name="Jeong J."/>
            <person name="McMahon A.P."/>
            <person name="Tessier-Lavigne M."/>
        </authorList>
    </citation>
    <scope>FUNCTION IN AXON GUIDANCE</scope>
</reference>
<reference key="13">
    <citation type="journal article" date="2004" name="Cell">
        <title>Dynamic changes in the response of cells to positive hedgehog signaling during mouse limb patterning.</title>
        <authorList>
            <person name="Ahn S."/>
            <person name="Joyner A.L."/>
        </authorList>
    </citation>
    <scope>FUNCTION IN LIMB DEVELOPMENT</scope>
</reference>
<reference key="14">
    <citation type="journal article" date="2004" name="Genes Dev.">
        <title>Palmitoylation is required for the production of a soluble multimeric Hedgehog protein complex and long-range signaling in vertebrates.</title>
        <authorList>
            <person name="Chen M.-H."/>
            <person name="Li Y.-J."/>
            <person name="Kawakami T."/>
            <person name="Xu S.-M."/>
            <person name="Chuang P.-T."/>
        </authorList>
    </citation>
    <scope>PALMITOYLATION AT CYS-25</scope>
    <scope>MUTAGENESIS OF CYS-25</scope>
    <scope>SUBUNIT</scope>
    <scope>SUBCELLULAR LOCATION</scope>
</reference>
<reference key="15">
    <citation type="journal article" date="2005" name="Proc. Natl. Acad. Sci. U.S.A.">
        <title>Molecular mechanisms of Sonic hedgehog mutant effects in holoprosencephaly.</title>
        <authorList>
            <person name="Maity T."/>
            <person name="Fuse N."/>
            <person name="Beachy P.A."/>
        </authorList>
    </citation>
    <scope>MUTAGENESIS OF GLY-32; ASP-89; GLN-101; ASN-116; TRP-118 AND GLU-189</scope>
</reference>
<reference key="16">
    <citation type="journal article" date="2008" name="FEBS J.">
        <title>Mammalian Gup1, a homolog of Saccharomyces cerevisiae glycerol uptake/transporter 1, acts as a negative regulator for N-terminal palmitoylation of Sonic hedgehog.</title>
        <authorList>
            <person name="Abe Y."/>
            <person name="Kita Y."/>
            <person name="Niikura T."/>
        </authorList>
    </citation>
    <scope>INTERACTION WITH HHATL</scope>
</reference>
<reference key="17">
    <citation type="journal article" date="2008" name="Dev. Cell">
        <title>Glypican-3 inhibits Hedgehog signaling during development by competing with patched for Hedgehog binding.</title>
        <authorList>
            <person name="Capurro M.I."/>
            <person name="Xu P."/>
            <person name="Shi W."/>
            <person name="Li F."/>
            <person name="Jia A."/>
            <person name="Filmus J."/>
        </authorList>
    </citation>
    <scope>INTERACTION WITH GPC3</scope>
</reference>
<reference key="18">
    <citation type="journal article" date="2011" name="J. Cell Biol.">
        <title>Processing and turnover of the Hedgehog protein in the endoplasmic reticulum.</title>
        <authorList>
            <person name="Chen X."/>
            <person name="Tukachinsky H."/>
            <person name="Huang C.H."/>
            <person name="Jao C."/>
            <person name="Chu Y.R."/>
            <person name="Tang H.Y."/>
            <person name="Mueller B."/>
            <person name="Schulman S."/>
            <person name="Rapoport T.A."/>
            <person name="Salic A."/>
        </authorList>
    </citation>
    <scope>REVIEW</scope>
    <scope>FUNCTION</scope>
</reference>
<reference key="19">
    <citation type="journal article" date="2012" name="Cell Rep.">
        <title>Dispatched and scube mediate the efficient secretion of the cholesterol-modified hedgehog ligand.</title>
        <authorList>
            <person name="Tukachinsky H."/>
            <person name="Kuzmickas R.P."/>
            <person name="Jao C.Y."/>
            <person name="Liu J."/>
            <person name="Salic A."/>
        </authorList>
    </citation>
    <scope>INTERACTION WITH DISP1 AND SCUBE2</scope>
    <scope>SUBUNIT</scope>
    <scope>CAUTION</scope>
</reference>
<reference key="20">
    <citation type="journal article" date="2012" name="Genes Dev.">
        <title>Scube/You activity mediates release of dually lipid-modified Hedgehog signal in soluble form.</title>
        <authorList>
            <person name="Creanga A."/>
            <person name="Glenn T.D."/>
            <person name="Mann R.K."/>
            <person name="Saunders A.M."/>
            <person name="Talbot W.S."/>
            <person name="Beachy P.A."/>
        </authorList>
    </citation>
    <scope>INTERACTION WITH SCUBE2</scope>
    <scope>SUBUNIT</scope>
    <scope>CAUTION</scope>
</reference>
<reference key="21">
    <citation type="journal article" date="2012" name="J. Biol. Chem.">
        <title>An emerging role of Sonic hedgehog shedding as a modulator of heparan sulfate interactions.</title>
        <authorList>
            <person name="Ohlig S."/>
            <person name="Pickhinke U."/>
            <person name="Sirko S."/>
            <person name="Bandari S."/>
            <person name="Hoffmann D."/>
            <person name="Dreier R."/>
            <person name="Farshi P."/>
            <person name="Goetz M."/>
            <person name="Grobe K."/>
        </authorList>
    </citation>
    <scope>PTM</scope>
    <scope>DOMAIN</scope>
</reference>
<reference key="22">
    <citation type="journal article" date="2014" name="J. Cell Sci.">
        <title>Scube2 enhances proteolytic Shh processing from the surface of Shh-producing cells.</title>
        <authorList>
            <person name="Jakobs P."/>
            <person name="Exner S."/>
            <person name="Schuermann S."/>
            <person name="Pickhinke U."/>
            <person name="Bandari S."/>
            <person name="Ortmann C."/>
            <person name="Kupich S."/>
            <person name="Schulz P."/>
            <person name="Hansen U."/>
            <person name="Seidler D.G."/>
            <person name="Grobe K."/>
        </authorList>
    </citation>
    <scope>PTM</scope>
    <scope>INTERACTION WITH SCUBE2</scope>
    <scope>SUBUNIT</scope>
</reference>
<reference key="23">
    <citation type="journal article" date="2015" name="Dev. Neurobiol.">
        <title>Primary cilium and sonic hedgehog signaling during neural tube patterning: role of GPCRs and second messengers.</title>
        <authorList>
            <person name="Pal K."/>
            <person name="Mukhopadhyay S."/>
        </authorList>
    </citation>
    <scope>REVIEW</scope>
    <scope>FUNCTION</scope>
</reference>
<reference key="24">
    <citation type="journal article" date="1995" name="Nature">
        <title>A potential catalytic site revealed by the 1.7-A crystal structure of the amino-terminal signalling domain of Sonic hedgehog.</title>
        <authorList>
            <person name="Hall T.M.T."/>
            <person name="Porter J.A."/>
            <person name="Beachy P.A."/>
            <person name="Leahy D.J."/>
        </authorList>
    </citation>
    <scope>X-RAY CRYSTALLOGRAPHY (1.7 ANGSTROMS) OF 34-195 IN COMPLEX WITH ZINC IONS</scope>
</reference>
<reference key="25">
    <citation type="journal article" date="2008" name="Nature">
        <title>The mode of Hedgehog binding to Ihog homologues is not conserved across different phyla.</title>
        <authorList>
            <person name="McLellan J.S."/>
            <person name="Zheng X."/>
            <person name="Hauk G."/>
            <person name="Ghirlando R."/>
            <person name="Beachy P.A."/>
            <person name="Leahy D.J."/>
        </authorList>
    </citation>
    <scope>X-RAY CRYSTALLOGRAPHY (1.7 ANGSTROMS) OF 26-189 IN COMPLEX WITH CDON; CALCIUM AND ZINC IONS</scope>
    <scope>DOMAIN</scope>
    <scope>INTERACTION WITH CDON</scope>
</reference>
<reference key="26">
    <citation type="journal article" date="2009" name="Nat. Struct. Mol. Biol.">
        <title>Structural insights into hedgehog ligand sequestration by the human hedgehog-interacting protein HHIP.</title>
        <authorList>
            <person name="Bishop B."/>
            <person name="Aricescu A.R."/>
            <person name="Harlos K."/>
            <person name="O'Callaghan C.A."/>
            <person name="Jones E.Y."/>
            <person name="Siebold C."/>
        </authorList>
    </citation>
    <scope>X-RAY CRYSTALLOGRAPHY (3.15 ANGSTROMS) OF 40-191 IN COMPLEX WITH HHIP; CALCIUM AND ZINC IONS</scope>
    <scope>DOMAIN</scope>
    <scope>INTERACTION WITH HHIP</scope>
</reference>
<reference key="27">
    <citation type="journal article" date="2010" name="J. Biol. Chem.">
        <title>All mammalian Hedgehog proteins interact with cell adhesion molecule, down-regulated by oncogenes (CDO) and brother of CDO (BOC) in a conserved manner.</title>
        <authorList>
            <person name="Kavran J.M."/>
            <person name="Ward M.D."/>
            <person name="Oladosu O.O."/>
            <person name="Mulepati S."/>
            <person name="Leahy D.J."/>
        </authorList>
    </citation>
    <scope>X-RAY CRYSTALLOGRAPHY (1.7 ANGSTROMS) OF 26-189 IN COMPLEX WITH CALCIUM AND ZINC IONS</scope>
    <scope>DOMAIN</scope>
    <scope>INTERACTION WITH BOC AND CDON</scope>
</reference>
<accession>Q62226</accession>
<name>SHH_MOUSE</name>
<feature type="signal peptide" evidence="2">
    <location>
        <begin position="1"/>
        <end position="24"/>
    </location>
</feature>
<feature type="chain" id="PRO_0000013211" description="Sonic hedgehog protein">
    <location>
        <begin position="25"/>
        <end position="437"/>
    </location>
</feature>
<feature type="chain" id="PRO_0000013212" description="Sonic hedgehog protein N-product">
    <location>
        <begin position="25"/>
        <end position="198"/>
    </location>
</feature>
<feature type="short sequence motif" description="Cardin-Weintraub" evidence="15">
    <location>
        <begin position="33"/>
        <end position="39"/>
    </location>
</feature>
<feature type="binding site" evidence="11 12 13">
    <location>
        <position position="90"/>
    </location>
    <ligand>
        <name>Ca(2+)</name>
        <dbReference type="ChEBI" id="CHEBI:29108"/>
        <label>1</label>
    </ligand>
</feature>
<feature type="binding site" evidence="11 12 13">
    <location>
        <position position="91"/>
    </location>
    <ligand>
        <name>Ca(2+)</name>
        <dbReference type="ChEBI" id="CHEBI:29108"/>
        <label>1</label>
    </ligand>
</feature>
<feature type="binding site" evidence="11 12 13">
    <location>
        <position position="91"/>
    </location>
    <ligand>
        <name>Ca(2+)</name>
        <dbReference type="ChEBI" id="CHEBI:29108"/>
        <label>2</label>
    </ligand>
</feature>
<feature type="binding site" evidence="11 12 13">
    <location>
        <position position="96"/>
    </location>
    <ligand>
        <name>Ca(2+)</name>
        <dbReference type="ChEBI" id="CHEBI:29108"/>
        <label>1</label>
    </ligand>
</feature>
<feature type="binding site" evidence="11 12 13">
    <location>
        <position position="126"/>
    </location>
    <ligand>
        <name>Ca(2+)</name>
        <dbReference type="ChEBI" id="CHEBI:29108"/>
        <label>1</label>
    </ligand>
</feature>
<feature type="binding site" evidence="11 12 13">
    <location>
        <position position="127"/>
    </location>
    <ligand>
        <name>Ca(2+)</name>
        <dbReference type="ChEBI" id="CHEBI:29108"/>
        <label>1</label>
    </ligand>
</feature>
<feature type="binding site" evidence="11 12 13">
    <location>
        <position position="127"/>
    </location>
    <ligand>
        <name>Ca(2+)</name>
        <dbReference type="ChEBI" id="CHEBI:29108"/>
        <label>2</label>
    </ligand>
</feature>
<feature type="binding site" evidence="11 12 13">
    <location>
        <position position="130"/>
    </location>
    <ligand>
        <name>Ca(2+)</name>
        <dbReference type="ChEBI" id="CHEBI:29108"/>
        <label>2</label>
    </ligand>
</feature>
<feature type="binding site" evidence="11 12 13">
    <location>
        <position position="132"/>
    </location>
    <ligand>
        <name>Ca(2+)</name>
        <dbReference type="ChEBI" id="CHEBI:29108"/>
        <label>2</label>
    </ligand>
</feature>
<feature type="binding site" evidence="11 12 13 17">
    <location>
        <position position="141"/>
    </location>
    <ligand>
        <name>Zn(2+)</name>
        <dbReference type="ChEBI" id="CHEBI:29105"/>
    </ligand>
</feature>
<feature type="binding site" evidence="11 12 13 17">
    <location>
        <position position="148"/>
    </location>
    <ligand>
        <name>Zn(2+)</name>
        <dbReference type="ChEBI" id="CHEBI:29105"/>
    </ligand>
</feature>
<feature type="binding site" evidence="11 12 13 17">
    <location>
        <position position="183"/>
    </location>
    <ligand>
        <name>Zn(2+)</name>
        <dbReference type="ChEBI" id="CHEBI:29105"/>
    </ligand>
</feature>
<feature type="site" description="Cleavage; by autolysis" evidence="1">
    <location>
        <begin position="198"/>
        <end position="199"/>
    </location>
</feature>
<feature type="site" description="Involved in cholesterol transfer" evidence="1">
    <location>
        <position position="244"/>
    </location>
</feature>
<feature type="site" description="Involved in auto-cleavage" evidence="1">
    <location>
        <position position="268"/>
    </location>
</feature>
<feature type="site" description="Essential for auto-cleavage" evidence="1">
    <location>
        <position position="271"/>
    </location>
</feature>
<feature type="lipid moiety-binding region" description="N-palmitoyl cysteine" evidence="4 6">
    <location>
        <position position="25"/>
    </location>
</feature>
<feature type="lipid moiety-binding region" description="Cholesterol glycine ester" evidence="21">
    <location>
        <position position="198"/>
    </location>
</feature>
<feature type="glycosylation site" description="N-linked (GlcNAc...) asparagine" evidence="3">
    <location>
        <position position="279"/>
    </location>
</feature>
<feature type="mutagenesis site" description="Strongly reduces effects of in vivo overexpression; impairs multimer formation; does not affect subcellular location to lipid rafts. Homozygous mice are characterized by a smaller size and holoprosencephaly at 10.5 dpc, and shortening of limbs at 13.5 dpc. They die soon after birth." evidence="4 6 15">
    <original>C</original>
    <variation>S</variation>
    <location>
        <position position="25"/>
    </location>
</feature>
<feature type="mutagenesis site" description="Introduces a cleavage site for a furin-like protease resulting in abnormal protein processing; cleavage at this site removes 11 amino acids from the N-terminal domain and reduces affinity of Shh for Ptch1 and signaling potency in assays using chicken embryo neural plate explants and mouse C3H10T1/2 stem cells." evidence="8">
    <original>G</original>
    <variation>R</variation>
    <location>
        <position position="32"/>
    </location>
</feature>
<feature type="mutagenesis site" description="Moderately reduces Ptch1 binding in vitro and signaling potency in chicken embryo neural plate explant assays compared with wild-type sequence." evidence="8">
    <original>D</original>
    <variation>V</variation>
    <location>
        <position position="89"/>
    </location>
</feature>
<feature type="mutagenesis site" description="Does not affect signaling activity in any of Shh signaling assays and causes no apparent defects in cholesterol-mediated autoprocessing reactions." evidence="8">
    <original>Q</original>
    <variation>H</variation>
    <location>
        <position position="101"/>
    </location>
</feature>
<feature type="mutagenesis site" description="Shows no change in activities at different temperatures." evidence="8">
    <original>N</original>
    <variation>K</variation>
    <location>
        <position position="116"/>
    </location>
</feature>
<feature type="mutagenesis site" description="Causes a failure of Shh processing leading to retention of the immature glycosylated protein within the endoplasmic reticulum of transfected cells; causes a temperature-dependent conformational change that allows Shh to bind Ptch1 at 4 or 32 degrees Celsius but not at 37 degrees Celsius; drastically reduces signaling potency in chicken embryo neural plate explant assays." evidence="8">
    <original>W</original>
    <variation>G</variation>
    <location>
        <position position="118"/>
    </location>
</feature>
<feature type="mutagenesis site" description="Causes a failure of Shh processing leading to retention of the immature glycosylated protein within the endoplasmic reticulum of transfected cells; causes a temperature-dependent conformational change that allows Shh to bind Ptch1 at 4 or 32 degrees Celsius but not at 37 degrees Celsius; drastically reduces signaling potency in chicken embryo neural plate explant assays." evidence="8">
    <original>W</original>
    <variation>R</variation>
    <location>
        <position position="118"/>
    </location>
</feature>
<feature type="mutagenesis site" description="Does not affect signaling activity in any of Shh signaling assays and causes no apparent defects in cholesterol-mediated autoprocessing reactions." evidence="8">
    <original>E</original>
    <variation>Q</variation>
    <location>
        <position position="189"/>
    </location>
</feature>
<feature type="strand" evidence="29">
    <location>
        <begin position="48"/>
        <end position="52"/>
    </location>
</feature>
<feature type="turn" evidence="29">
    <location>
        <begin position="57"/>
        <end position="60"/>
    </location>
</feature>
<feature type="strand" evidence="31">
    <location>
        <begin position="69"/>
        <end position="71"/>
    </location>
</feature>
<feature type="helix" evidence="29">
    <location>
        <begin position="72"/>
        <end position="76"/>
    </location>
</feature>
<feature type="strand" evidence="29">
    <location>
        <begin position="85"/>
        <end position="87"/>
    </location>
</feature>
<feature type="strand" evidence="29">
    <location>
        <begin position="92"/>
        <end position="94"/>
    </location>
</feature>
<feature type="helix" evidence="29">
    <location>
        <begin position="95"/>
        <end position="97"/>
    </location>
</feature>
<feature type="helix" evidence="29">
    <location>
        <begin position="101"/>
        <end position="117"/>
    </location>
</feature>
<feature type="strand" evidence="29">
    <location>
        <begin position="123"/>
        <end position="127"/>
    </location>
</feature>
<feature type="strand" evidence="30">
    <location>
        <begin position="131"/>
        <end position="135"/>
    </location>
</feature>
<feature type="helix" evidence="29">
    <location>
        <begin position="140"/>
        <end position="143"/>
    </location>
</feature>
<feature type="strand" evidence="29">
    <location>
        <begin position="146"/>
        <end position="151"/>
    </location>
</feature>
<feature type="helix" evidence="29">
    <location>
        <begin position="156"/>
        <end position="158"/>
    </location>
</feature>
<feature type="helix" evidence="29">
    <location>
        <begin position="159"/>
        <end position="168"/>
    </location>
</feature>
<feature type="strand" evidence="29">
    <location>
        <begin position="172"/>
        <end position="178"/>
    </location>
</feature>
<feature type="strand" evidence="29">
    <location>
        <begin position="181"/>
        <end position="185"/>
    </location>
</feature>
<feature type="helix" evidence="29">
    <location>
        <begin position="189"/>
        <end position="192"/>
    </location>
</feature>
<proteinExistence type="evidence at protein level"/>
<organism>
    <name type="scientific">Mus musculus</name>
    <name type="common">Mouse</name>
    <dbReference type="NCBI Taxonomy" id="10090"/>
    <lineage>
        <taxon>Eukaryota</taxon>
        <taxon>Metazoa</taxon>
        <taxon>Chordata</taxon>
        <taxon>Craniata</taxon>
        <taxon>Vertebrata</taxon>
        <taxon>Euteleostomi</taxon>
        <taxon>Mammalia</taxon>
        <taxon>Eutheria</taxon>
        <taxon>Euarchontoglires</taxon>
        <taxon>Glires</taxon>
        <taxon>Rodentia</taxon>
        <taxon>Myomorpha</taxon>
        <taxon>Muroidea</taxon>
        <taxon>Muridae</taxon>
        <taxon>Murinae</taxon>
        <taxon>Mus</taxon>
        <taxon>Mus</taxon>
    </lineage>
</organism>
<keyword id="KW-0002">3D-structure</keyword>
<keyword id="KW-0068">Autocatalytic cleavage</keyword>
<keyword id="KW-0106">Calcium</keyword>
<keyword id="KW-1003">Cell membrane</keyword>
<keyword id="KW-0217">Developmental protein</keyword>
<keyword id="KW-0256">Endoplasmic reticulum</keyword>
<keyword id="KW-0325">Glycoprotein</keyword>
<keyword id="KW-0333">Golgi apparatus</keyword>
<keyword id="KW-0378">Hydrolase</keyword>
<keyword id="KW-0449">Lipoprotein</keyword>
<keyword id="KW-0472">Membrane</keyword>
<keyword id="KW-0479">Metal-binding</keyword>
<keyword id="KW-0564">Palmitate</keyword>
<keyword id="KW-0645">Protease</keyword>
<keyword id="KW-1185">Reference proteome</keyword>
<keyword id="KW-0732">Signal</keyword>
<keyword id="KW-0808">Transferase</keyword>
<keyword id="KW-0862">Zinc</keyword>
<comment type="function">
    <molecule>Sonic hedgehog protein</molecule>
    <text evidence="19 20 21 24">The C-terminal part of the sonic hedgehog protein precursor displays an autoproteolysis and a cholesterol transferase activity (PubMed:7736596, PubMed:7891723, PubMed:8824192). Both activities result in the cleavage of the full-length protein into two parts (ShhN and ShhC) followed by the covalent attachment of a cholesterol moiety to the C-terminal of the newly generated ShhN (PubMed:8824192). Both activities occur in the reticulum endoplasmic (PubMed:21357747). Once cleaved, ShhC is degraded in the endoplasmic reticulum (PubMed:21357747).</text>
</comment>
<comment type="function">
    <molecule>Sonic hedgehog protein N-product</molecule>
    <text evidence="2 5 19 22">The dually lipidated sonic hedgehog protein N-product (ShhNp) is a morphogen which is essential for a variety of patterning events during development. Induces ventral cell fate in the neural tube and somites (PubMed:11430830, PubMed:24863049). Involved in the patterning of the anterior-posterior axis of the developing limb bud (PubMed:15315762). Essential for axon guidance (PubMed:12679031). Binds to the patched (PTCH1) receptor, which functions in association with smoothened (SMO), to activate the transcription of target genes (By similarity). In the absence of SHH, PTCH1 represses the constitutive signaling activity of SMO (By similarity).</text>
</comment>
<comment type="catalytic activity">
    <molecule>Sonic hedgehog protein</molecule>
    <reaction evidence="21">
        <text>glycyl-L-cysteinyl-[protein] + cholesterol + H(+) = [protein]-C-terminal glycyl cholesterol ester + N-terminal L-cysteinyl-[protein]</text>
        <dbReference type="Rhea" id="RHEA:59504"/>
        <dbReference type="Rhea" id="RHEA-COMP:12707"/>
        <dbReference type="Rhea" id="RHEA-COMP:15369"/>
        <dbReference type="Rhea" id="RHEA-COMP:15374"/>
        <dbReference type="ChEBI" id="CHEBI:15378"/>
        <dbReference type="ChEBI" id="CHEBI:16113"/>
        <dbReference type="ChEBI" id="CHEBI:65250"/>
        <dbReference type="ChEBI" id="CHEBI:143135"/>
        <dbReference type="ChEBI" id="CHEBI:143140"/>
    </reaction>
    <physiologicalReaction direction="left-to-right" evidence="21">
        <dbReference type="Rhea" id="RHEA:59505"/>
    </physiologicalReaction>
</comment>
<comment type="subunit">
    <text evidence="2 6 9 10 11 12 13 14 17">Interacts with HHATL/GUP1 which negatively regulates HHAT-mediated palmitoylation of the SHH N-terminus (PubMed:18081866). Interacts with BOC and CDON (PubMed:18794898). Interacts with HHIP (By similarity). Interacts with DISP1 via its cholesterol anchor (PubMed:22677548, PubMed:22902404). Interacts with SCUBE2 (PubMed:22677548, PubMed:24522195). Interacts with glypican GPC3 (PubMed:18477453).</text>
</comment>
<comment type="subunit">
    <molecule>Sonic hedgehog protein N-product</molecule>
    <text evidence="16">Multimer.</text>
</comment>
<comment type="interaction">
    <interactant intactId="EBI-15610166">
        <id>Q62226</id>
    </interactant>
    <interactant intactId="EBI-7016840">
        <id>Q4KMG0</id>
        <label>CDON</label>
    </interactant>
    <organismsDiffer>true</organismsDiffer>
    <experiments>7</experiments>
</comment>
<comment type="interaction">
    <interactant intactId="EBI-15610166">
        <id>Q62226</id>
    </interactant>
    <interactant intactId="EBI-15791478">
        <id>Q96QV1-1</id>
        <label>HHIP</label>
    </interactant>
    <organismsDiffer>true</organismsDiffer>
    <experiments>4</experiments>
</comment>
<comment type="subcellular location">
    <molecule>Sonic hedgehog protein</molecule>
    <subcellularLocation>
        <location evidence="2">Endoplasmic reticulum membrane</location>
    </subcellularLocation>
    <subcellularLocation>
        <location evidence="2">Golgi apparatus membrane</location>
    </subcellularLocation>
    <text evidence="2">Co-localizes with HHAT in the ER and Golgi membrane.</text>
</comment>
<comment type="subcellular location">
    <molecule>Sonic hedgehog protein N-product</molecule>
    <subcellularLocation>
        <location evidence="20">Cell membrane</location>
        <topology evidence="20">Lipid-anchor</topology>
    </subcellularLocation>
    <text evidence="16 25">The dual-lipidated sonic hedgehog protein N-product (ShhNp) is firmly tethered to the cell membrane where it forms multimers (PubMed:24522195). Further solubilization and release from the cell surface seem to be achieved through different mechanisms, including the interaction with DISP1 and SCUBE2, movement by lipoprotein particles, transport by cellular extensions called cytonemes or by the proteolytic removal of both terminal lipidated peptides.</text>
</comment>
<comment type="tissue specificity">
    <text>Expressed in a number of embryonic tissues including the notochord, ventral neural tube, floor plate, lung bud, zone of polarizing activity and posterior distal mesenchyme of limbs. In the adult, expressed in lung and neural retina.</text>
</comment>
<comment type="developmental stage">
    <text>First detectable during gastrulation.</text>
</comment>
<comment type="induction">
    <text>By retinoic acid.</text>
</comment>
<comment type="domain">
    <molecule>Sonic hedgehog protein N-product</molecule>
    <text evidence="11 12 13">Binds calcium and zinc ions; this stabilizes the protein fold and is essential for protein-protein interactions mediated by this domain.</text>
</comment>
<comment type="domain">
    <molecule>Sonic hedgehog protein N-product</molecule>
    <text evidence="15 16">The Cardin-Weintraub (CW) motif is required for heparan sulfate binding of the solubilized ShhNp (PubMed:23118222). The N-terminal palmitoylated peptide is cleaved at the heparan sulfate-binding Cardin-Weintraub (CW) motif site (PubMed:24522195). The cleavage reduced the interactions with heparan sulfate. The cleavage is enhanced by SCUBE2 (PubMed:24522195).</text>
</comment>
<comment type="PTM">
    <molecule>Sonic hedgehog protein</molecule>
    <text evidence="18 19 20 21 24 27">The C-terminal domain displays an autoproteolysis activity and a cholesterol transferase activity (PubMed:7736596, PubMed:7891723, PubMed:8824192). Both activities result in the cleavage of the full-length protein and covalent attachment of a cholesterol moiety to the C-terminal of the newly generated N-terminal fragment (ShhN) (PubMed:7736596, PubMed:7891723, PubMed:8824192). Cholesterylation is required for the sonic hedgehog protein N-product targeting to lipid rafts and multimerization (PubMed:24522195, PubMed:8824192). ShhN is the active species in both local and long-range signaling, whereas the C-product (ShhC) is degraded in the endoplasmic reticulum (PubMed:21357747).</text>
</comment>
<comment type="PTM">
    <molecule>Sonic hedgehog protein N-product</molecule>
    <text evidence="4 6 16">N-palmitoylation by HHAT of ShhN is required for sonic hedgehog protein N-product multimerization and full activity (PubMed:11486055, PubMed:15075292). It is a prerequisite for the membrane-proximal positioning and the subsequent shedding of this N-terminal peptide (PubMed:24522195).</text>
</comment>
<comment type="PTM">
    <molecule>Sonic hedgehog protein N-product</molecule>
    <text evidence="15 16">The lipidated N- and C-terminal peptides of ShhNp can be cleaved (shedding) (PubMed:24522195). The N-terminal palmitoylated peptide is cleaved at the Cardin-Weintraub (CW) motif site (PubMed:24522195). The cleavage reduced the interactions with heparan sulfate (PubMed:23118222). The cleavage is enhanced by SCUBE2.</text>
</comment>
<comment type="miscellaneous">
    <text evidence="7">Mice overexpressing Shh display digit duplications in both forelimbs and hindlimbs.</text>
</comment>
<comment type="similarity">
    <text evidence="23">Belongs to the hedgehog family.</text>
</comment>
<comment type="caution">
    <text evidence="16 25 26">The several steps and mechanisms that permit controlled Shh dispersion and gradient formation remain controversial. The ShhNC C-terminal domain displays an autoproteolysis activity and a cholesterol transferase activity resulting in the cleavage and covalent attachment of a cholesterol moiety to the C-terminal of the newly generated N-terminal fragment (ShhN). The protein is further modified by covalent addition of palmitate at the N-terminal of ShhN, resulting to the dual-lipidated Shh (ShhNp). ShhNp is firmly tethered to the cell membrane where it forms multimers. Further solubilization and release from the cell surface seem to be achieved through different mechanisms, including the interaction with DISP1 and SCUBE2, movement by lipoprotein particles, transport by cellular extensions called cytonemes or by proteolytic removal of both terminal lipidated peptides. Once released, the fully processed Shh can signal within embryonic tissues both at short and long-range.</text>
</comment>
<protein>
    <recommendedName>
        <fullName evidence="23">Sonic hedgehog protein</fullName>
        <shortName>SHH</shortName>
        <ecNumber evidence="21">3.1.-.-</ecNumber>
    </recommendedName>
    <alternativeName>
        <fullName>HHG-1</fullName>
    </alternativeName>
    <alternativeName>
        <fullName evidence="22">Shh unprocessed N-terminal signaling and C-terminal autoprocessing domains</fullName>
        <shortName evidence="22">ShhNC</shortName>
    </alternativeName>
    <component>
        <recommendedName>
            <fullName>Sonic hedgehog protein N-product</fullName>
            <shortName>ShhN</shortName>
        </recommendedName>
        <alternativeName>
            <fullName evidence="22">Shh N-terminal processed signaling domains</fullName>
            <shortName evidence="22">ShhNp</shortName>
        </alternativeName>
        <alternativeName>
            <fullName>Sonic hedgehog protein 19 kDa product</fullName>
        </alternativeName>
    </component>
</protein>
<sequence length="437" mass="47773">MLLLLARCFLVILASSLLVCPGLACGPGRGFGKRRHPKKLTPLAYKQFIPNVAEKTLGASGRYEGKITRNSERFKELTPNYNPDIIFKDEENTGADRLMTQRCKDKLNALAISVMNQWPGVKLRVTEGWDEDGHHSEESLHYEGRAVDITTSDRDRSKYGMLARLAVEAGFDWVYYESKAHIHCSVKAENSVAAKSGGCFPGSATVHLEQGGTKLVKDLRPGDRVLAADDQGRLLYSDFLTFLDRDEGAKKVFYVIETLEPRERLLLTAAHLLFVAPHNDSGPTPGPSALFASRVRPGQRVYVVAERGGDRRLLPAAVHSVTLREEEAGAYAPLTAHGTILINRVLASCYAVIEEHSWAHRAFAPFRLAHALLAALAPARTDGGGGGSIPAAQSATEARGAEPTAGIHWYSQLLYHIGTWLLDSETMHPLGMAVKSS</sequence>
<evidence type="ECO:0000250" key="1">
    <source>
        <dbReference type="UniProtKB" id="Q02936"/>
    </source>
</evidence>
<evidence type="ECO:0000250" key="2">
    <source>
        <dbReference type="UniProtKB" id="Q15465"/>
    </source>
</evidence>
<evidence type="ECO:0000255" key="3"/>
<evidence type="ECO:0000269" key="4">
    <source>
    </source>
</evidence>
<evidence type="ECO:0000269" key="5">
    <source>
    </source>
</evidence>
<evidence type="ECO:0000269" key="6">
    <source>
    </source>
</evidence>
<evidence type="ECO:0000269" key="7">
    <source>
    </source>
</evidence>
<evidence type="ECO:0000269" key="8">
    <source>
    </source>
</evidence>
<evidence type="ECO:0000269" key="9">
    <source>
    </source>
</evidence>
<evidence type="ECO:0000269" key="10">
    <source>
    </source>
</evidence>
<evidence type="ECO:0000269" key="11">
    <source>
    </source>
</evidence>
<evidence type="ECO:0000269" key="12">
    <source>
    </source>
</evidence>
<evidence type="ECO:0000269" key="13">
    <source>
    </source>
</evidence>
<evidence type="ECO:0000269" key="14">
    <source>
    </source>
</evidence>
<evidence type="ECO:0000269" key="15">
    <source>
    </source>
</evidence>
<evidence type="ECO:0000269" key="16">
    <source>
    </source>
</evidence>
<evidence type="ECO:0000269" key="17">
    <source>
    </source>
</evidence>
<evidence type="ECO:0000269" key="18">
    <source>
    </source>
</evidence>
<evidence type="ECO:0000269" key="19">
    <source>
    </source>
</evidence>
<evidence type="ECO:0000269" key="20">
    <source>
    </source>
</evidence>
<evidence type="ECO:0000269" key="21">
    <source>
    </source>
</evidence>
<evidence type="ECO:0000303" key="22">
    <source>
    </source>
</evidence>
<evidence type="ECO:0000305" key="23"/>
<evidence type="ECO:0000305" key="24">
    <source>
    </source>
</evidence>
<evidence type="ECO:0000305" key="25">
    <source>
    </source>
</evidence>
<evidence type="ECO:0000305" key="26">
    <source>
    </source>
</evidence>
<evidence type="ECO:0000305" key="27">
    <source>
    </source>
</evidence>
<evidence type="ECO:0000312" key="28">
    <source>
        <dbReference type="MGI" id="MGI:98297"/>
    </source>
</evidence>
<evidence type="ECO:0007829" key="29">
    <source>
        <dbReference type="PDB" id="1VHH"/>
    </source>
</evidence>
<evidence type="ECO:0007829" key="30">
    <source>
        <dbReference type="PDB" id="2WG4"/>
    </source>
</evidence>
<evidence type="ECO:0007829" key="31">
    <source>
        <dbReference type="PDB" id="3N1R"/>
    </source>
</evidence>